<protein>
    <recommendedName>
        <fullName>Neurogenic locus notch homolog protein 3</fullName>
        <shortName>Notch 3</shortName>
    </recommendedName>
    <component>
        <recommendedName>
            <fullName>Notch 3 extracellular truncation</fullName>
        </recommendedName>
    </component>
    <component>
        <recommendedName>
            <fullName>Notch 3 intracellular domain</fullName>
        </recommendedName>
    </component>
</protein>
<dbReference type="EMBL" id="U97669">
    <property type="protein sequence ID" value="AAB91371.1"/>
    <property type="molecule type" value="mRNA"/>
</dbReference>
<dbReference type="EMBL" id="AF058900">
    <property type="protein sequence ID" value="AAC14346.1"/>
    <property type="molecule type" value="Genomic_DNA"/>
</dbReference>
<dbReference type="EMBL" id="AF058881">
    <property type="protein sequence ID" value="AAC14346.1"/>
    <property type="status" value="JOINED"/>
    <property type="molecule type" value="Genomic_DNA"/>
</dbReference>
<dbReference type="EMBL" id="AF058882">
    <property type="protein sequence ID" value="AAC14346.1"/>
    <property type="status" value="JOINED"/>
    <property type="molecule type" value="Genomic_DNA"/>
</dbReference>
<dbReference type="EMBL" id="AF058883">
    <property type="protein sequence ID" value="AAC14346.1"/>
    <property type="status" value="JOINED"/>
    <property type="molecule type" value="Genomic_DNA"/>
</dbReference>
<dbReference type="EMBL" id="AF058884">
    <property type="protein sequence ID" value="AAC14346.1"/>
    <property type="status" value="JOINED"/>
    <property type="molecule type" value="Genomic_DNA"/>
</dbReference>
<dbReference type="EMBL" id="AF058885">
    <property type="protein sequence ID" value="AAC14346.1"/>
    <property type="status" value="JOINED"/>
    <property type="molecule type" value="Genomic_DNA"/>
</dbReference>
<dbReference type="EMBL" id="AF058886">
    <property type="protein sequence ID" value="AAC14346.1"/>
    <property type="status" value="JOINED"/>
    <property type="molecule type" value="Genomic_DNA"/>
</dbReference>
<dbReference type="EMBL" id="AF058887">
    <property type="protein sequence ID" value="AAC14346.1"/>
    <property type="status" value="JOINED"/>
    <property type="molecule type" value="Genomic_DNA"/>
</dbReference>
<dbReference type="EMBL" id="AF058888">
    <property type="protein sequence ID" value="AAC14346.1"/>
    <property type="status" value="JOINED"/>
    <property type="molecule type" value="Genomic_DNA"/>
</dbReference>
<dbReference type="EMBL" id="AF058889">
    <property type="protein sequence ID" value="AAC14346.1"/>
    <property type="status" value="JOINED"/>
    <property type="molecule type" value="Genomic_DNA"/>
</dbReference>
<dbReference type="EMBL" id="AF058890">
    <property type="protein sequence ID" value="AAC14346.1"/>
    <property type="status" value="JOINED"/>
    <property type="molecule type" value="Genomic_DNA"/>
</dbReference>
<dbReference type="EMBL" id="AF058891">
    <property type="protein sequence ID" value="AAC14346.1"/>
    <property type="status" value="JOINED"/>
    <property type="molecule type" value="Genomic_DNA"/>
</dbReference>
<dbReference type="EMBL" id="AF058892">
    <property type="protein sequence ID" value="AAC14346.1"/>
    <property type="status" value="JOINED"/>
    <property type="molecule type" value="Genomic_DNA"/>
</dbReference>
<dbReference type="EMBL" id="AF058893">
    <property type="protein sequence ID" value="AAC14346.1"/>
    <property type="status" value="JOINED"/>
    <property type="molecule type" value="Genomic_DNA"/>
</dbReference>
<dbReference type="EMBL" id="AF058894">
    <property type="protein sequence ID" value="AAC14346.1"/>
    <property type="status" value="JOINED"/>
    <property type="molecule type" value="Genomic_DNA"/>
</dbReference>
<dbReference type="EMBL" id="AF058895">
    <property type="protein sequence ID" value="AAC14346.1"/>
    <property type="status" value="JOINED"/>
    <property type="molecule type" value="Genomic_DNA"/>
</dbReference>
<dbReference type="EMBL" id="AF058896">
    <property type="protein sequence ID" value="AAC14346.1"/>
    <property type="status" value="JOINED"/>
    <property type="molecule type" value="Genomic_DNA"/>
</dbReference>
<dbReference type="EMBL" id="AF058897">
    <property type="protein sequence ID" value="AAC14346.1"/>
    <property type="status" value="JOINED"/>
    <property type="molecule type" value="Genomic_DNA"/>
</dbReference>
<dbReference type="EMBL" id="AF058898">
    <property type="protein sequence ID" value="AAC14346.1"/>
    <property type="status" value="JOINED"/>
    <property type="molecule type" value="Genomic_DNA"/>
</dbReference>
<dbReference type="EMBL" id="AF058899">
    <property type="protein sequence ID" value="AAC14346.1"/>
    <property type="status" value="JOINED"/>
    <property type="molecule type" value="Genomic_DNA"/>
</dbReference>
<dbReference type="EMBL" id="AC004257">
    <property type="protein sequence ID" value="AAC04897.1"/>
    <property type="molecule type" value="Genomic_DNA"/>
</dbReference>
<dbReference type="EMBL" id="AC004663">
    <property type="protein sequence ID" value="AAC15789.1"/>
    <property type="molecule type" value="Genomic_DNA"/>
</dbReference>
<dbReference type="CCDS" id="CCDS12326.1"/>
<dbReference type="PIR" id="S78549">
    <property type="entry name" value="S78549"/>
</dbReference>
<dbReference type="RefSeq" id="NP_000426.2">
    <property type="nucleotide sequence ID" value="NM_000435.3"/>
</dbReference>
<dbReference type="PDB" id="4ZLP">
    <property type="method" value="X-ray"/>
    <property type="resolution" value="2.48 A"/>
    <property type="chains" value="A/B=1378-1640"/>
</dbReference>
<dbReference type="PDB" id="5CZV">
    <property type="method" value="X-ray"/>
    <property type="resolution" value="3.19 A"/>
    <property type="chains" value="A=1378-1640"/>
</dbReference>
<dbReference type="PDB" id="5CZX">
    <property type="method" value="X-ray"/>
    <property type="resolution" value="2.10 A"/>
    <property type="chains" value="A/B=1378-1640"/>
</dbReference>
<dbReference type="PDB" id="6WQU">
    <property type="method" value="X-ray"/>
    <property type="resolution" value="2.41 A"/>
    <property type="chains" value="D=1665-1682"/>
</dbReference>
<dbReference type="PDB" id="6XSW">
    <property type="method" value="X-ray"/>
    <property type="resolution" value="2.98 A"/>
    <property type="chains" value="C/F/J/X=1378-1634"/>
</dbReference>
<dbReference type="PDB" id="8OS0">
    <property type="method" value="NMR"/>
    <property type="chains" value="A=1642-1665"/>
</dbReference>
<dbReference type="PDBsum" id="4ZLP"/>
<dbReference type="PDBsum" id="5CZV"/>
<dbReference type="PDBsum" id="5CZX"/>
<dbReference type="PDBsum" id="6WQU"/>
<dbReference type="PDBsum" id="6XSW"/>
<dbReference type="PDBsum" id="8OS0"/>
<dbReference type="SMR" id="Q9UM47"/>
<dbReference type="BioGRID" id="110916">
    <property type="interactions" value="131"/>
</dbReference>
<dbReference type="DIP" id="DIP-39827N"/>
<dbReference type="ELM" id="Q9UM47"/>
<dbReference type="FunCoup" id="Q9UM47">
    <property type="interactions" value="976"/>
</dbReference>
<dbReference type="IntAct" id="Q9UM47">
    <property type="interactions" value="69"/>
</dbReference>
<dbReference type="MINT" id="Q9UM47"/>
<dbReference type="STRING" id="9606.ENSP00000263388"/>
<dbReference type="BindingDB" id="Q9UM47"/>
<dbReference type="ChEMBL" id="CHEMBL3407319"/>
<dbReference type="GuidetoPHARMACOLOGY" id="2860"/>
<dbReference type="GlyCosmos" id="Q9UM47">
    <property type="glycosylation" value="7 sites, 1 glycan"/>
</dbReference>
<dbReference type="GlyGen" id="Q9UM47">
    <property type="glycosylation" value="18 sites, 8 N-linked glycans (3 sites), 1 O-linked glycan (13 sites)"/>
</dbReference>
<dbReference type="iPTMnet" id="Q9UM47"/>
<dbReference type="PhosphoSitePlus" id="Q9UM47"/>
<dbReference type="BioMuta" id="NOTCH3"/>
<dbReference type="DMDM" id="322510053"/>
<dbReference type="jPOST" id="Q9UM47"/>
<dbReference type="MassIVE" id="Q9UM47"/>
<dbReference type="PaxDb" id="9606-ENSP00000263388"/>
<dbReference type="PeptideAtlas" id="Q9UM47"/>
<dbReference type="ProteomicsDB" id="85176"/>
<dbReference type="Pumba" id="Q9UM47"/>
<dbReference type="ABCD" id="Q9UM47">
    <property type="antibodies" value="127 sequenced antibodies"/>
</dbReference>
<dbReference type="Antibodypedia" id="3951">
    <property type="antibodies" value="741 antibodies from 46 providers"/>
</dbReference>
<dbReference type="DNASU" id="4854"/>
<dbReference type="Ensembl" id="ENST00000263388.7">
    <property type="protein sequence ID" value="ENSP00000263388.1"/>
    <property type="gene ID" value="ENSG00000074181.9"/>
</dbReference>
<dbReference type="GeneID" id="4854"/>
<dbReference type="KEGG" id="hsa:4854"/>
<dbReference type="MANE-Select" id="ENST00000263388.7">
    <property type="protein sequence ID" value="ENSP00000263388.1"/>
    <property type="RefSeq nucleotide sequence ID" value="NM_000435.3"/>
    <property type="RefSeq protein sequence ID" value="NP_000426.2"/>
</dbReference>
<dbReference type="UCSC" id="uc002nan.4">
    <property type="organism name" value="human"/>
</dbReference>
<dbReference type="AGR" id="HGNC:7883"/>
<dbReference type="CTD" id="4854"/>
<dbReference type="DisGeNET" id="4854"/>
<dbReference type="GeneCards" id="NOTCH3"/>
<dbReference type="GeneReviews" id="NOTCH3"/>
<dbReference type="HGNC" id="HGNC:7883">
    <property type="gene designation" value="NOTCH3"/>
</dbReference>
<dbReference type="HPA" id="ENSG00000074181">
    <property type="expression patterns" value="Low tissue specificity"/>
</dbReference>
<dbReference type="MalaCards" id="NOTCH3"/>
<dbReference type="MIM" id="125310">
    <property type="type" value="phenotype"/>
</dbReference>
<dbReference type="MIM" id="130720">
    <property type="type" value="phenotype"/>
</dbReference>
<dbReference type="MIM" id="600276">
    <property type="type" value="gene"/>
</dbReference>
<dbReference type="MIM" id="615293">
    <property type="type" value="phenotype"/>
</dbReference>
<dbReference type="neXtProt" id="NX_Q9UM47"/>
<dbReference type="OpenTargets" id="ENSG00000074181"/>
<dbReference type="Orphanet" id="136">
    <property type="disease" value="Cerebral autosomal dominant arteriopathy-subcortical infarcts-leukoencephalopathy"/>
</dbReference>
<dbReference type="Orphanet" id="2591">
    <property type="disease" value="Infantile myofibromatosis"/>
</dbReference>
<dbReference type="Orphanet" id="2789">
    <property type="disease" value="Lateral meningocele syndrome"/>
</dbReference>
<dbReference type="PharmGKB" id="PA31685"/>
<dbReference type="VEuPathDB" id="HostDB:ENSG00000074181"/>
<dbReference type="eggNOG" id="KOG1217">
    <property type="taxonomic scope" value="Eukaryota"/>
</dbReference>
<dbReference type="GeneTree" id="ENSGT00940000160234"/>
<dbReference type="HOGENOM" id="CLU_000576_0_0_1"/>
<dbReference type="InParanoid" id="Q9UM47"/>
<dbReference type="OMA" id="QNINDCD"/>
<dbReference type="OrthoDB" id="283575at2759"/>
<dbReference type="PAN-GO" id="Q9UM47">
    <property type="GO annotations" value="5 GO annotations based on evolutionary models"/>
</dbReference>
<dbReference type="PhylomeDB" id="Q9UM47"/>
<dbReference type="TreeFam" id="TF351641"/>
<dbReference type="PathwayCommons" id="Q9UM47"/>
<dbReference type="Reactome" id="R-HSA-1912399">
    <property type="pathway name" value="Pre-NOTCH Processing in the Endoplasmic Reticulum"/>
</dbReference>
<dbReference type="Reactome" id="R-HSA-1912408">
    <property type="pathway name" value="Pre-NOTCH Transcription and Translation"/>
</dbReference>
<dbReference type="Reactome" id="R-HSA-1912420">
    <property type="pathway name" value="Pre-NOTCH Processing in Golgi"/>
</dbReference>
<dbReference type="Reactome" id="R-HSA-350054">
    <property type="pathway name" value="Notch-HLH transcription pathway"/>
</dbReference>
<dbReference type="Reactome" id="R-HSA-5083630">
    <property type="pathway name" value="Defective LFNG causes SCDO3"/>
</dbReference>
<dbReference type="Reactome" id="R-HSA-9013507">
    <property type="pathway name" value="NOTCH3 Activation and Transmission of Signal to the Nucleus"/>
</dbReference>
<dbReference type="Reactome" id="R-HSA-9013508">
    <property type="pathway name" value="NOTCH3 Intracellular Domain Regulates Transcription"/>
</dbReference>
<dbReference type="Reactome" id="R-HSA-9017802">
    <property type="pathway name" value="Noncanonical activation of NOTCH3"/>
</dbReference>
<dbReference type="SignaLink" id="Q9UM47"/>
<dbReference type="SIGNOR" id="Q9UM47"/>
<dbReference type="BioGRID-ORCS" id="4854">
    <property type="hits" value="13 hits in 1163 CRISPR screens"/>
</dbReference>
<dbReference type="ChiTaRS" id="NOTCH3">
    <property type="organism name" value="human"/>
</dbReference>
<dbReference type="EvolutionaryTrace" id="Q9UM47"/>
<dbReference type="GeneWiki" id="Notch_3"/>
<dbReference type="GenomeRNAi" id="4854"/>
<dbReference type="Pharos" id="Q9UM47">
    <property type="development level" value="Tchem"/>
</dbReference>
<dbReference type="PRO" id="PR:Q9UM47"/>
<dbReference type="Proteomes" id="UP000005640">
    <property type="component" value="Chromosome 19"/>
</dbReference>
<dbReference type="RNAct" id="Q9UM47">
    <property type="molecule type" value="protein"/>
</dbReference>
<dbReference type="Bgee" id="ENSG00000074181">
    <property type="expression patterns" value="Expressed in popliteal artery and 196 other cell types or tissues"/>
</dbReference>
<dbReference type="ExpressionAtlas" id="Q9UM47">
    <property type="expression patterns" value="baseline and differential"/>
</dbReference>
<dbReference type="GO" id="GO:0009986">
    <property type="term" value="C:cell surface"/>
    <property type="evidence" value="ECO:0000318"/>
    <property type="project" value="GO_Central"/>
</dbReference>
<dbReference type="GO" id="GO:0005829">
    <property type="term" value="C:cytosol"/>
    <property type="evidence" value="ECO:0000304"/>
    <property type="project" value="Reactome"/>
</dbReference>
<dbReference type="GO" id="GO:0005789">
    <property type="term" value="C:endoplasmic reticulum membrane"/>
    <property type="evidence" value="ECO:0000304"/>
    <property type="project" value="Reactome"/>
</dbReference>
<dbReference type="GO" id="GO:0005576">
    <property type="term" value="C:extracellular region"/>
    <property type="evidence" value="ECO:0000304"/>
    <property type="project" value="Reactome"/>
</dbReference>
<dbReference type="GO" id="GO:0000139">
    <property type="term" value="C:Golgi membrane"/>
    <property type="evidence" value="ECO:0000304"/>
    <property type="project" value="Reactome"/>
</dbReference>
<dbReference type="GO" id="GO:0005654">
    <property type="term" value="C:nucleoplasm"/>
    <property type="evidence" value="ECO:0000314"/>
    <property type="project" value="HPA"/>
</dbReference>
<dbReference type="GO" id="GO:0005886">
    <property type="term" value="C:plasma membrane"/>
    <property type="evidence" value="ECO:0000314"/>
    <property type="project" value="UniProtKB"/>
</dbReference>
<dbReference type="GO" id="GO:0043235">
    <property type="term" value="C:receptor complex"/>
    <property type="evidence" value="ECO:0000314"/>
    <property type="project" value="MGI"/>
</dbReference>
<dbReference type="GO" id="GO:0045296">
    <property type="term" value="F:cadherin binding"/>
    <property type="evidence" value="ECO:0007005"/>
    <property type="project" value="BHF-UCL"/>
</dbReference>
<dbReference type="GO" id="GO:0005509">
    <property type="term" value="F:calcium ion binding"/>
    <property type="evidence" value="ECO:0007669"/>
    <property type="project" value="InterPro"/>
</dbReference>
<dbReference type="GO" id="GO:0019899">
    <property type="term" value="F:enzyme binding"/>
    <property type="evidence" value="ECO:0007669"/>
    <property type="project" value="Ensembl"/>
</dbReference>
<dbReference type="GO" id="GO:0042802">
    <property type="term" value="F:identical protein binding"/>
    <property type="evidence" value="ECO:0000353"/>
    <property type="project" value="IntAct"/>
</dbReference>
<dbReference type="GO" id="GO:0038023">
    <property type="term" value="F:signaling receptor activity"/>
    <property type="evidence" value="ECO:0000315"/>
    <property type="project" value="UniProtKB"/>
</dbReference>
<dbReference type="GO" id="GO:0048844">
    <property type="term" value="P:artery morphogenesis"/>
    <property type="evidence" value="ECO:0007669"/>
    <property type="project" value="Ensembl"/>
</dbReference>
<dbReference type="GO" id="GO:0030900">
    <property type="term" value="P:forebrain development"/>
    <property type="evidence" value="ECO:0007669"/>
    <property type="project" value="Ensembl"/>
</dbReference>
<dbReference type="GO" id="GO:0072104">
    <property type="term" value="P:glomerular capillary formation"/>
    <property type="evidence" value="ECO:0007669"/>
    <property type="project" value="Ensembl"/>
</dbReference>
<dbReference type="GO" id="GO:0045665">
    <property type="term" value="P:negative regulation of neuron differentiation"/>
    <property type="evidence" value="ECO:0007669"/>
    <property type="project" value="Ensembl"/>
</dbReference>
<dbReference type="GO" id="GO:0000122">
    <property type="term" value="P:negative regulation of transcription by RNA polymerase II"/>
    <property type="evidence" value="ECO:0007669"/>
    <property type="project" value="Ensembl"/>
</dbReference>
<dbReference type="GO" id="GO:0014016">
    <property type="term" value="P:neuroblast differentiation"/>
    <property type="evidence" value="ECO:0007669"/>
    <property type="project" value="Ensembl"/>
</dbReference>
<dbReference type="GO" id="GO:0048663">
    <property type="term" value="P:neuron fate commitment"/>
    <property type="evidence" value="ECO:0007669"/>
    <property type="project" value="Ensembl"/>
</dbReference>
<dbReference type="GO" id="GO:0007219">
    <property type="term" value="P:Notch signaling pathway"/>
    <property type="evidence" value="ECO:0000318"/>
    <property type="project" value="GO_Central"/>
</dbReference>
<dbReference type="GO" id="GO:1902895">
    <property type="term" value="P:positive regulation of miRNA transcription"/>
    <property type="evidence" value="ECO:0000315"/>
    <property type="project" value="BHF-UCL"/>
</dbReference>
<dbReference type="GO" id="GO:0048661">
    <property type="term" value="P:positive regulation of smooth muscle cell proliferation"/>
    <property type="evidence" value="ECO:0007669"/>
    <property type="project" value="Ensembl"/>
</dbReference>
<dbReference type="GO" id="GO:0045944">
    <property type="term" value="P:positive regulation of transcription by RNA polymerase II"/>
    <property type="evidence" value="ECO:0007669"/>
    <property type="project" value="Ensembl"/>
</dbReference>
<dbReference type="CDD" id="cd00054">
    <property type="entry name" value="EGF_CA"/>
    <property type="match status" value="24"/>
</dbReference>
<dbReference type="CDD" id="cd21704">
    <property type="entry name" value="JMTM_Notch3"/>
    <property type="match status" value="1"/>
</dbReference>
<dbReference type="FunFam" id="2.10.25.10:FF:000117">
    <property type="entry name" value="Delta-like protein"/>
    <property type="match status" value="1"/>
</dbReference>
<dbReference type="FunFam" id="1.25.40.20:FF:000005">
    <property type="entry name" value="Neurogenic locus notch 1"/>
    <property type="match status" value="1"/>
</dbReference>
<dbReference type="FunFam" id="2.10.25.10:FF:000004">
    <property type="entry name" value="Neurogenic locus notch 1"/>
    <property type="match status" value="3"/>
</dbReference>
<dbReference type="FunFam" id="2.10.25.10:FF:000080">
    <property type="entry name" value="Neurogenic locus notch 1"/>
    <property type="match status" value="2"/>
</dbReference>
<dbReference type="FunFam" id="2.10.25.10:FF:000136">
    <property type="entry name" value="Neurogenic locus notch 1"/>
    <property type="match status" value="1"/>
</dbReference>
<dbReference type="FunFam" id="3.30.300.320:FF:000001">
    <property type="entry name" value="Neurogenic locus notch 1"/>
    <property type="match status" value="1"/>
</dbReference>
<dbReference type="FunFam" id="2.10.25.10:FF:000534">
    <property type="entry name" value="Neurogenic locus notch homolog protein 3"/>
    <property type="match status" value="1"/>
</dbReference>
<dbReference type="FunFam" id="2.10.25.10:FF:000687">
    <property type="entry name" value="Neurogenic locus notch homolog protein 3"/>
    <property type="match status" value="1"/>
</dbReference>
<dbReference type="FunFam" id="3.30.70.3310:FF:000002">
    <property type="entry name" value="Neurogenic locus notch homolog protein 3"/>
    <property type="match status" value="1"/>
</dbReference>
<dbReference type="FunFam" id="2.10.25.10:FF:000031">
    <property type="entry name" value="neurogenic locus notch homolog protein 3"/>
    <property type="match status" value="1"/>
</dbReference>
<dbReference type="FunFam" id="2.10.25.10:FF:000100">
    <property type="entry name" value="neurogenic locus notch homolog protein 3"/>
    <property type="match status" value="1"/>
</dbReference>
<dbReference type="FunFam" id="2.10.25.10:FF:000272">
    <property type="entry name" value="neurogenic locus notch homolog protein 3"/>
    <property type="match status" value="1"/>
</dbReference>
<dbReference type="FunFam" id="2.10.25.10:FF:000446">
    <property type="entry name" value="neurogenic locus notch homolog protein 3"/>
    <property type="match status" value="1"/>
</dbReference>
<dbReference type="FunFam" id="2.10.25.10:FF:000455">
    <property type="entry name" value="neurogenic locus notch homolog protein 3"/>
    <property type="match status" value="1"/>
</dbReference>
<dbReference type="FunFam" id="2.10.25.10:FF:000777">
    <property type="entry name" value="neurogenic locus notch homolog protein 3"/>
    <property type="match status" value="1"/>
</dbReference>
<dbReference type="FunFam" id="2.10.25.10:FF:000060">
    <property type="entry name" value="Neurogenic locus notch protein 1"/>
    <property type="match status" value="2"/>
</dbReference>
<dbReference type="FunFam" id="2.10.25.10:FF:000092">
    <property type="entry name" value="Neurogenic locus notch protein 1"/>
    <property type="match status" value="1"/>
</dbReference>
<dbReference type="FunFam" id="2.10.25.10:FF:000127">
    <property type="entry name" value="Neurogenic locus notch protein 1"/>
    <property type="match status" value="1"/>
</dbReference>
<dbReference type="FunFam" id="2.10.25.10:FF:000173">
    <property type="entry name" value="Neurogenic locus notch protein 2"/>
    <property type="match status" value="1"/>
</dbReference>
<dbReference type="FunFam" id="2.10.25.10:FF:000125">
    <property type="entry name" value="Neurogenic locus notch protein-like"/>
    <property type="match status" value="1"/>
</dbReference>
<dbReference type="FunFam" id="2.10.25.10:FF:000109">
    <property type="entry name" value="Notch homolog 4, [Drosophila]"/>
    <property type="match status" value="1"/>
</dbReference>
<dbReference type="FunFam" id="2.10.25.10:FF:000299">
    <property type="entry name" value="Notch receptor 3"/>
    <property type="match status" value="2"/>
</dbReference>
<dbReference type="FunFam" id="2.10.25.10:FF:000516">
    <property type="entry name" value="Notch receptor 3"/>
    <property type="match status" value="1"/>
</dbReference>
<dbReference type="FunFam" id="2.10.25.10:FF:000522">
    <property type="entry name" value="Notch receptor 3"/>
    <property type="match status" value="1"/>
</dbReference>
<dbReference type="FunFam" id="2.10.25.10:FF:000718">
    <property type="entry name" value="Notch receptor 3"/>
    <property type="match status" value="1"/>
</dbReference>
<dbReference type="FunFam" id="2.10.25.10:FF:000095">
    <property type="entry name" value="Notch, isoform B"/>
    <property type="match status" value="1"/>
</dbReference>
<dbReference type="FunFam" id="2.10.25.10:FF:000143">
    <property type="entry name" value="Protein crumbs 1"/>
    <property type="match status" value="1"/>
</dbReference>
<dbReference type="FunFam" id="2.10.25.10:FF:000146">
    <property type="entry name" value="Putative neurogenic locus notch"/>
    <property type="match status" value="1"/>
</dbReference>
<dbReference type="Gene3D" id="3.30.300.320">
    <property type="match status" value="1"/>
</dbReference>
<dbReference type="Gene3D" id="3.30.70.3310">
    <property type="match status" value="1"/>
</dbReference>
<dbReference type="Gene3D" id="1.25.40.20">
    <property type="entry name" value="Ankyrin repeat-containing domain"/>
    <property type="match status" value="1"/>
</dbReference>
<dbReference type="Gene3D" id="2.10.25.10">
    <property type="entry name" value="Laminin"/>
    <property type="match status" value="33"/>
</dbReference>
<dbReference type="InterPro" id="IPR002110">
    <property type="entry name" value="Ankyrin_rpt"/>
</dbReference>
<dbReference type="InterPro" id="IPR036770">
    <property type="entry name" value="Ankyrin_rpt-contain_sf"/>
</dbReference>
<dbReference type="InterPro" id="IPR001881">
    <property type="entry name" value="EGF-like_Ca-bd_dom"/>
</dbReference>
<dbReference type="InterPro" id="IPR013032">
    <property type="entry name" value="EGF-like_CS"/>
</dbReference>
<dbReference type="InterPro" id="IPR000742">
    <property type="entry name" value="EGF-like_dom"/>
</dbReference>
<dbReference type="InterPro" id="IPR000152">
    <property type="entry name" value="EGF-type_Asp/Asn_hydroxyl_site"/>
</dbReference>
<dbReference type="InterPro" id="IPR018097">
    <property type="entry name" value="EGF_Ca-bd_CS"/>
</dbReference>
<dbReference type="InterPro" id="IPR009030">
    <property type="entry name" value="Growth_fac_rcpt_cys_sf"/>
</dbReference>
<dbReference type="InterPro" id="IPR008297">
    <property type="entry name" value="Notch"/>
</dbReference>
<dbReference type="InterPro" id="IPR035993">
    <property type="entry name" value="Notch-like_dom_sf"/>
</dbReference>
<dbReference type="InterPro" id="IPR051355">
    <property type="entry name" value="Notch/Slit_guidance"/>
</dbReference>
<dbReference type="InterPro" id="IPR049883">
    <property type="entry name" value="NOTCH1_EGF-like"/>
</dbReference>
<dbReference type="InterPro" id="IPR022331">
    <property type="entry name" value="Notch_3"/>
</dbReference>
<dbReference type="InterPro" id="IPR024600">
    <property type="entry name" value="Notch_C"/>
</dbReference>
<dbReference type="InterPro" id="IPR000800">
    <property type="entry name" value="Notch_dom"/>
</dbReference>
<dbReference type="InterPro" id="IPR010660">
    <property type="entry name" value="Notch_NOD_dom"/>
</dbReference>
<dbReference type="InterPro" id="IPR011656">
    <property type="entry name" value="Notch_NODP_dom"/>
</dbReference>
<dbReference type="PANTHER" id="PTHR45836:SF23">
    <property type="entry name" value="NEUROGENIC LOCUS NOTCH HOMOLOG PROTEIN 1"/>
    <property type="match status" value="1"/>
</dbReference>
<dbReference type="PANTHER" id="PTHR45836">
    <property type="entry name" value="SLIT HOMOLOG"/>
    <property type="match status" value="1"/>
</dbReference>
<dbReference type="Pfam" id="PF00023">
    <property type="entry name" value="Ank"/>
    <property type="match status" value="1"/>
</dbReference>
<dbReference type="Pfam" id="PF12796">
    <property type="entry name" value="Ank_2"/>
    <property type="match status" value="2"/>
</dbReference>
<dbReference type="Pfam" id="PF00008">
    <property type="entry name" value="EGF"/>
    <property type="match status" value="17"/>
</dbReference>
<dbReference type="Pfam" id="PF07645">
    <property type="entry name" value="EGF_CA"/>
    <property type="match status" value="5"/>
</dbReference>
<dbReference type="Pfam" id="PF12661">
    <property type="entry name" value="hEGF"/>
    <property type="match status" value="7"/>
</dbReference>
<dbReference type="Pfam" id="PF06816">
    <property type="entry name" value="NOD"/>
    <property type="match status" value="1"/>
</dbReference>
<dbReference type="Pfam" id="PF07684">
    <property type="entry name" value="NODP"/>
    <property type="match status" value="1"/>
</dbReference>
<dbReference type="Pfam" id="PF00066">
    <property type="entry name" value="Notch"/>
    <property type="match status" value="3"/>
</dbReference>
<dbReference type="PIRSF" id="PIRSF002279">
    <property type="entry name" value="Notch"/>
    <property type="match status" value="1"/>
</dbReference>
<dbReference type="PRINTS" id="PR00010">
    <property type="entry name" value="EGFBLOOD"/>
</dbReference>
<dbReference type="PRINTS" id="PR01452">
    <property type="entry name" value="LNOTCHREPEAT"/>
</dbReference>
<dbReference type="PRINTS" id="PR01983">
    <property type="entry name" value="NOTCH"/>
</dbReference>
<dbReference type="PRINTS" id="PR01986">
    <property type="entry name" value="NOTCH3"/>
</dbReference>
<dbReference type="SMART" id="SM00248">
    <property type="entry name" value="ANK"/>
    <property type="match status" value="6"/>
</dbReference>
<dbReference type="SMART" id="SM01334">
    <property type="entry name" value="DUF3454"/>
    <property type="match status" value="1"/>
</dbReference>
<dbReference type="SMART" id="SM00181">
    <property type="entry name" value="EGF"/>
    <property type="match status" value="34"/>
</dbReference>
<dbReference type="SMART" id="SM00179">
    <property type="entry name" value="EGF_CA"/>
    <property type="match status" value="31"/>
</dbReference>
<dbReference type="SMART" id="SM00004">
    <property type="entry name" value="NL"/>
    <property type="match status" value="3"/>
</dbReference>
<dbReference type="SMART" id="SM01338">
    <property type="entry name" value="NOD"/>
    <property type="match status" value="1"/>
</dbReference>
<dbReference type="SMART" id="SM01339">
    <property type="entry name" value="NODP"/>
    <property type="match status" value="1"/>
</dbReference>
<dbReference type="SUPFAM" id="SSF48403">
    <property type="entry name" value="Ankyrin repeat"/>
    <property type="match status" value="1"/>
</dbReference>
<dbReference type="SUPFAM" id="SSF57196">
    <property type="entry name" value="EGF/Laminin"/>
    <property type="match status" value="20"/>
</dbReference>
<dbReference type="SUPFAM" id="SSF57184">
    <property type="entry name" value="Growth factor receptor domain"/>
    <property type="match status" value="4"/>
</dbReference>
<dbReference type="SUPFAM" id="SSF90193">
    <property type="entry name" value="Notch domain"/>
    <property type="match status" value="3"/>
</dbReference>
<dbReference type="PROSITE" id="PS50297">
    <property type="entry name" value="ANK_REP_REGION"/>
    <property type="match status" value="1"/>
</dbReference>
<dbReference type="PROSITE" id="PS50088">
    <property type="entry name" value="ANK_REPEAT"/>
    <property type="match status" value="4"/>
</dbReference>
<dbReference type="PROSITE" id="PS00010">
    <property type="entry name" value="ASX_HYDROXYL"/>
    <property type="match status" value="18"/>
</dbReference>
<dbReference type="PROSITE" id="PS00022">
    <property type="entry name" value="EGF_1"/>
    <property type="match status" value="33"/>
</dbReference>
<dbReference type="PROSITE" id="PS01186">
    <property type="entry name" value="EGF_2"/>
    <property type="match status" value="25"/>
</dbReference>
<dbReference type="PROSITE" id="PS50026">
    <property type="entry name" value="EGF_3"/>
    <property type="match status" value="34"/>
</dbReference>
<dbReference type="PROSITE" id="PS01187">
    <property type="entry name" value="EGF_CA"/>
    <property type="match status" value="16"/>
</dbReference>
<dbReference type="PROSITE" id="PS50258">
    <property type="entry name" value="LNR"/>
    <property type="match status" value="3"/>
</dbReference>
<organism>
    <name type="scientific">Homo sapiens</name>
    <name type="common">Human</name>
    <dbReference type="NCBI Taxonomy" id="9606"/>
    <lineage>
        <taxon>Eukaryota</taxon>
        <taxon>Metazoa</taxon>
        <taxon>Chordata</taxon>
        <taxon>Craniata</taxon>
        <taxon>Vertebrata</taxon>
        <taxon>Euteleostomi</taxon>
        <taxon>Mammalia</taxon>
        <taxon>Eutheria</taxon>
        <taxon>Euarchontoglires</taxon>
        <taxon>Primates</taxon>
        <taxon>Haplorrhini</taxon>
        <taxon>Catarrhini</taxon>
        <taxon>Hominidae</taxon>
        <taxon>Homo</taxon>
    </lineage>
</organism>
<comment type="function">
    <text evidence="2 23">Functions as a receptor for membrane-bound ligands Jagged1, Jagged2 and Delta1 to regulate cell-fate determination (PubMed:15350543). Upon ligand activation through the released notch intracellular domain (NICD) it forms a transcriptional activator complex with RBPJ/RBPSUH and activates genes of the enhancer of split locus. Affects the implementation of differentiation, proliferation and apoptotic programs (By similarity).</text>
</comment>
<comment type="subunit">
    <text evidence="1 11 18 28 29">Heterodimer of a C-terminal fragment N(TM) and a N-terminal fragment N(EC) which are probably linked by disulfide bonds (By similarity). Interacts with MAML1, MAML2 and MAML3 which act as transcriptional coactivators for NOTCH3. Interacts with PSMA1. Interacts with HIF1AN.</text>
</comment>
<comment type="interaction">
    <interactant intactId="EBI-1236377">
        <id>Q9UM47</id>
    </interactant>
    <interactant intactId="EBI-1236377">
        <id>Q9UM47</id>
        <label>NOTCH3</label>
    </interactant>
    <organismsDiffer>false</organismsDiffer>
    <experiments>2</experiments>
</comment>
<comment type="interaction">
    <interactant intactId="EBI-1236377">
        <id>Q9UM47</id>
    </interactant>
    <interactant intactId="EBI-12754095">
        <id>P86480</id>
        <label>PRR20D</label>
    </interactant>
    <organismsDiffer>false</organismsDiffer>
    <experiments>3</experiments>
</comment>
<comment type="interaction">
    <interactant intactId="EBI-1236377">
        <id>Q9UM47</id>
    </interactant>
    <interactant intactId="EBI-991653">
        <id>Q9R1P4</id>
        <label>Psma1</label>
    </interactant>
    <organismsDiffer>true</organismsDiffer>
    <experiments>2</experiments>
</comment>
<comment type="subcellular location">
    <subcellularLocation>
        <location evidence="23">Cell membrane</location>
        <topology>Single-pass type I membrane protein</topology>
    </subcellularLocation>
</comment>
<comment type="subcellular location">
    <molecule>Notch 3 intracellular domain</molecule>
    <subcellularLocation>
        <location>Nucleus</location>
    </subcellularLocation>
    <text>Following proteolytical processing NICD is translocated to the nucleus.</text>
</comment>
<comment type="tissue specificity">
    <text>Ubiquitously expressed in fetal and adult tissues.</text>
</comment>
<comment type="domain">
    <text evidence="23">The EGF-like domains 10 and 11 are required for binding the ligands JAG1 and DLL1.</text>
</comment>
<comment type="PTM">
    <text evidence="23">Synthesized in the endoplasmic reticulum as an inactive form which is proteolytically cleaved by a furin-like convertase in the trans-Golgi network before it reaches the plasma membrane to yield an active, ligand-accessible form. Cleavage results in a C-terminal fragment N(TM) and a N-terminal fragment N(EC). Following ligand binding, it is cleaved by TNF-alpha converting enzyme (TACE) to yield a membrane-associated intermediate fragment called notch extracellular truncation (NEXT). This fragment is then cleaved by presenilin dependent gamma-secretase to release a notch-derived peptide containing the intracellular domain (NICD) from the membrane.</text>
</comment>
<comment type="PTM">
    <text evidence="1">Phosphorylated.</text>
</comment>
<comment type="PTM">
    <text evidence="31">Hydroxylated by HIF1AN.</text>
</comment>
<comment type="disease" evidence="6 7 8 9 10 12 13 14 15 16 17 19 20 21 22 23 24 25 26 27 33 36">
    <disease id="DI-01334">
        <name>Cerebral arteriopathy, autosomal dominant, with subcortical infarcts and leukoencephalopathy, 1</name>
        <acronym>CADASIL1</acronym>
        <description>A cerebrovascular disease characterized by multiple subcortical infarcts, pseudobulbar palsy, dementia, and the presence of granular deposits in small cerebral arteries producing ischemic stroke.</description>
        <dbReference type="MIM" id="125310"/>
    </disease>
    <text>The disease is caused by variants affecting the gene represented in this entry.</text>
</comment>
<comment type="disease" evidence="32">
    <disease id="DI-03816">
        <name>Myofibromatosis, infantile 2</name>
        <acronym>IMF2</acronym>
        <description>A rare mesenchymal disorder characterized by the development of benign tumors in the skin, striated muscles, bones, and, more rarely, visceral organs. Subcutaneous or soft tissue nodules commonly involve the skin of the head, neck, and trunk. Skeletal and muscular lesions occur in about half of the patients. Lesions may be solitary or multicentric, and they may be present at birth or become apparent in early infancy or occasionally in adult life. Visceral lesions are associated with high morbidity and mortality.</description>
        <dbReference type="MIM" id="615293"/>
    </disease>
    <text>The disease is caused by variants affecting the gene represented in this entry.</text>
</comment>
<comment type="disease" evidence="34">
    <disease id="DI-04541">
        <name>Lateral meningocele syndrome</name>
        <acronym>LMNS</acronym>
        <description>A very rare skeletal disorder with facial anomalies, hypotonia and neurologic dysfunction due to meningocele, a protrusion of the meninges, unaccompanied by neural tissue, through a bony defect in the skull or vertebral column. LMNS facial features include hypertelorism and telecanthus, high arched eyebrows, ptosis, mid-facial hypoplasia, micrognathia, high and narrow palate, low-set ears and a hypotonic appearance. Additional variable features are connective tissue abnormalities, aortic dilation, a high-pitched nasal voice, wormian bones and osteolysis.</description>
        <dbReference type="MIM" id="130720"/>
    </disease>
    <text>The disease is caused by variants affecting the gene represented in this entry.</text>
</comment>
<comment type="similarity">
    <text evidence="37">Belongs to the NOTCH family.</text>
</comment>
<comment type="online information" name="Atlas of Genetics and Cytogenetics in Oncology and Haematology">
    <link uri="https://atlasgeneticsoncology.org/gene/41557/NOTCH3"/>
</comment>
<name>NOTC3_HUMAN</name>
<accession>Q9UM47</accession>
<accession>Q9UEB3</accession>
<accession>Q9UPL3</accession>
<accession>Q9Y6L8</accession>
<reference key="1">
    <citation type="journal article" date="1996" name="Nature">
        <title>Notch3 mutations in CADASIL, a hereditary adult-onset condition causing stroke and dementia.</title>
        <authorList>
            <person name="Joutel A."/>
            <person name="Corpechot C."/>
            <person name="Ducros A."/>
            <person name="Vahedi K."/>
            <person name="Chabriat H."/>
            <person name="Mouton P."/>
            <person name="Alamowitch S."/>
            <person name="Domenga V."/>
            <person name="Cecillion M."/>
            <person name="Marechal E."/>
            <person name="Maciazek J."/>
            <person name="Vayssiere C."/>
            <person name="Cruaud C."/>
            <person name="Cabanis E.-A."/>
            <person name="Ruchoux M.M."/>
            <person name="Weissenbach J."/>
            <person name="Bach J.-F."/>
            <person name="Bousser M.-G."/>
            <person name="Tournier-Lasserve E."/>
        </authorList>
    </citation>
    <scope>NUCLEOTIDE SEQUENCE [MRNA]</scope>
    <scope>VARIANT VAL-2223</scope>
</reference>
<reference key="2">
    <citation type="submission" date="1998-04" db="EMBL/GenBank/DDBJ databases">
        <authorList>
            <person name="Gunel M."/>
            <person name="Artavanis-Tsakonas S."/>
        </authorList>
    </citation>
    <scope>NUCLEOTIDE SEQUENCE [GENOMIC DNA]</scope>
</reference>
<reference key="3">
    <citation type="journal article" date="2004" name="Nature">
        <title>The DNA sequence and biology of human chromosome 19.</title>
        <authorList>
            <person name="Grimwood J."/>
            <person name="Gordon L.A."/>
            <person name="Olsen A.S."/>
            <person name="Terry A."/>
            <person name="Schmutz J."/>
            <person name="Lamerdin J.E."/>
            <person name="Hellsten U."/>
            <person name="Goodstein D."/>
            <person name="Couronne O."/>
            <person name="Tran-Gyamfi M."/>
            <person name="Aerts A."/>
            <person name="Altherr M."/>
            <person name="Ashworth L."/>
            <person name="Bajorek E."/>
            <person name="Black S."/>
            <person name="Branscomb E."/>
            <person name="Caenepeel S."/>
            <person name="Carrano A.V."/>
            <person name="Caoile C."/>
            <person name="Chan Y.M."/>
            <person name="Christensen M."/>
            <person name="Cleland C.A."/>
            <person name="Copeland A."/>
            <person name="Dalin E."/>
            <person name="Dehal P."/>
            <person name="Denys M."/>
            <person name="Detter J.C."/>
            <person name="Escobar J."/>
            <person name="Flowers D."/>
            <person name="Fotopulos D."/>
            <person name="Garcia C."/>
            <person name="Georgescu A.M."/>
            <person name="Glavina T."/>
            <person name="Gomez M."/>
            <person name="Gonzales E."/>
            <person name="Groza M."/>
            <person name="Hammon N."/>
            <person name="Hawkins T."/>
            <person name="Haydu L."/>
            <person name="Ho I."/>
            <person name="Huang W."/>
            <person name="Israni S."/>
            <person name="Jett J."/>
            <person name="Kadner K."/>
            <person name="Kimball H."/>
            <person name="Kobayashi A."/>
            <person name="Larionov V."/>
            <person name="Leem S.-H."/>
            <person name="Lopez F."/>
            <person name="Lou Y."/>
            <person name="Lowry S."/>
            <person name="Malfatti S."/>
            <person name="Martinez D."/>
            <person name="McCready P.M."/>
            <person name="Medina C."/>
            <person name="Morgan J."/>
            <person name="Nelson K."/>
            <person name="Nolan M."/>
            <person name="Ovcharenko I."/>
            <person name="Pitluck S."/>
            <person name="Pollard M."/>
            <person name="Popkie A.P."/>
            <person name="Predki P."/>
            <person name="Quan G."/>
            <person name="Ramirez L."/>
            <person name="Rash S."/>
            <person name="Retterer J."/>
            <person name="Rodriguez A."/>
            <person name="Rogers S."/>
            <person name="Salamov A."/>
            <person name="Salazar A."/>
            <person name="She X."/>
            <person name="Smith D."/>
            <person name="Slezak T."/>
            <person name="Solovyev V."/>
            <person name="Thayer N."/>
            <person name="Tice H."/>
            <person name="Tsai M."/>
            <person name="Ustaszewska A."/>
            <person name="Vo N."/>
            <person name="Wagner M."/>
            <person name="Wheeler J."/>
            <person name="Wu K."/>
            <person name="Xie G."/>
            <person name="Yang J."/>
            <person name="Dubchak I."/>
            <person name="Furey T.S."/>
            <person name="DeJong P."/>
            <person name="Dickson M."/>
            <person name="Gordon D."/>
            <person name="Eichler E.E."/>
            <person name="Pennacchio L.A."/>
            <person name="Richardson P."/>
            <person name="Stubbs L."/>
            <person name="Rokhsar D.S."/>
            <person name="Myers R.M."/>
            <person name="Rubin E.M."/>
            <person name="Lucas S.M."/>
        </authorList>
    </citation>
    <scope>NUCLEOTIDE SEQUENCE [LARGE SCALE GENOMIC DNA]</scope>
</reference>
<reference key="4">
    <citation type="journal article" date="1999" name="Am. J. Pathol.">
        <title>Human ligands of the Notch receptor.</title>
        <authorList>
            <person name="Gray G.E."/>
            <person name="Mann R.S."/>
            <person name="Mitsiadis E."/>
            <person name="Henrique D."/>
            <person name="Carcangiu M.-L."/>
            <person name="Banks A."/>
            <person name="Leiman J."/>
            <person name="Ward D."/>
            <person name="Ish-Horowitz D."/>
            <person name="Artavanis-Tsakonas S."/>
        </authorList>
    </citation>
    <scope>IDENTIFICATION OF LIGANDS</scope>
</reference>
<reference key="5">
    <citation type="journal article" date="2000" name="Nat. Genet.">
        <title>MAML1, a human homologue of Drosophila mastermind, is a transcriptional co-activator for NOTCH receptors.</title>
        <authorList>
            <person name="Wu L."/>
            <person name="Aster J.C."/>
            <person name="Blacklow S.C."/>
            <person name="Lake R."/>
            <person name="Artavanis-Tsakonas S."/>
            <person name="Griffin J.D."/>
        </authorList>
    </citation>
    <scope>INTERACTION WITH MAML1</scope>
</reference>
<reference key="6">
    <citation type="journal article" date="2002" name="Mol. Cell. Biol.">
        <title>Identification of a family of mastermind-like transcriptional coactivators for mammalian notch receptors.</title>
        <authorList>
            <person name="Wu L."/>
            <person name="Sun T."/>
            <person name="Kobayashi K."/>
            <person name="Gao P."/>
            <person name="Griffin J.D."/>
        </authorList>
    </citation>
    <scope>INTERACTION WITH MAML2 AND MAML3</scope>
</reference>
<reference key="7">
    <citation type="journal article" date="2007" name="Biochem. Biophys. Res. Commun.">
        <title>Conserved signal peptide of Notch3 inhibits interaction with proteasome.</title>
        <authorList>
            <person name="Zhang Y."/>
            <person name="Jia L."/>
            <person name="Lee S.J."/>
            <person name="Wang M.M."/>
        </authorList>
    </citation>
    <scope>INTERACTION WITH PSMA1</scope>
</reference>
<reference key="8">
    <citation type="journal article" date="2007" name="J. Biol. Chem.">
        <title>Asparaginyl hydroxylation of the Notch ankyrin repeat domain by factor inhibiting hypoxia-inducible factor.</title>
        <authorList>
            <person name="Coleman M.L."/>
            <person name="McDonough M.A."/>
            <person name="Hewitson K.S."/>
            <person name="Coles C."/>
            <person name="Mecinovic J."/>
            <person name="Edelmann M."/>
            <person name="Cook K.M."/>
            <person name="Cockman M.E."/>
            <person name="Lancaster D.E."/>
            <person name="Kessler B.M."/>
            <person name="Oldham N.J."/>
            <person name="Ratcliffe P.J."/>
            <person name="Schofield C.J."/>
        </authorList>
    </citation>
    <scope>INTERACTION WITH HIF1AN</scope>
</reference>
<reference key="9">
    <citation type="journal article" date="2008" name="Proc. Natl. Acad. Sci. U.S.A.">
        <title>Interaction with factor inhibiting HIF-1 defines an additional mode of cross-coupling between the Notch and hypoxia signaling pathways.</title>
        <authorList>
            <person name="Zheng X."/>
            <person name="Linke S."/>
            <person name="Dias J.M."/>
            <person name="Zheng X."/>
            <person name="Gradin K."/>
            <person name="Wallis T.P."/>
            <person name="Hamilton B.R."/>
            <person name="Gustafsson M."/>
            <person name="Ruas J.L."/>
            <person name="Wilkins S."/>
            <person name="Bilton R.L."/>
            <person name="Brismar K."/>
            <person name="Whitelaw M.L."/>
            <person name="Pereira T."/>
            <person name="Gorman J.J."/>
            <person name="Ericson J."/>
            <person name="Peet D.J."/>
            <person name="Lendahl U."/>
            <person name="Poellinger L."/>
        </authorList>
    </citation>
    <scope>HYDROXYLATION BY HIF1AN</scope>
</reference>
<reference key="10">
    <citation type="journal article" date="2014" name="Mol. Cell. Proteomics">
        <title>Immunoaffinity enrichment and mass spectrometry analysis of protein methylation.</title>
        <authorList>
            <person name="Guo A."/>
            <person name="Gu H."/>
            <person name="Zhou J."/>
            <person name="Mulhern D."/>
            <person name="Wang Y."/>
            <person name="Lee K.A."/>
            <person name="Yang V."/>
            <person name="Aguiar M."/>
            <person name="Kornhauser J."/>
            <person name="Jia X."/>
            <person name="Ren J."/>
            <person name="Beausoleil S.A."/>
            <person name="Silva J.C."/>
            <person name="Vemulapalli V."/>
            <person name="Bedford M.T."/>
            <person name="Comb M.J."/>
        </authorList>
    </citation>
    <scope>METHYLATION [LARGE SCALE ANALYSIS] AT ARG-2174</scope>
    <scope>IDENTIFICATION BY MASS SPECTROMETRY [LARGE SCALE ANALYSIS]</scope>
    <source>
        <tissue>Colon carcinoma</tissue>
    </source>
</reference>
<reference key="11">
    <citation type="journal article" date="2015" name="Am. J. Med. Genet. A">
        <title>Truncating mutations in the last exon of NOTCH3 cause lateral meningocele syndrome.</title>
        <authorList>
            <person name="Gripp K.W."/>
            <person name="Robbins K.M."/>
            <person name="Sobreira N.L."/>
            <person name="Witmer P.D."/>
            <person name="Bird L.M."/>
            <person name="Avela K."/>
            <person name="Makitie O."/>
            <person name="Alves D."/>
            <person name="Hogue J.S."/>
            <person name="Zackai E.H."/>
            <person name="Doheny K.F."/>
            <person name="Stabley D.L."/>
            <person name="Sol-Church K."/>
        </authorList>
    </citation>
    <scope>INVOLVEMENT IN LMNS</scope>
</reference>
<reference key="12">
    <citation type="journal article" date="1997" name="Lancet">
        <title>Strong clustering and stereotyped nature of Notch3 mutations in CADASIL patients.</title>
        <authorList>
            <person name="Joutel A."/>
            <person name="Vahedi K."/>
            <person name="Corpechot C."/>
            <person name="Troesch A."/>
            <person name="Chabriat H."/>
            <person name="Vayssiere C."/>
            <person name="Cruaud C."/>
            <person name="Maciazek J."/>
            <person name="Weissenbach J."/>
            <person name="Bousser M.-G."/>
            <person name="Bach J.-F."/>
            <person name="Tournier-Lasserve E."/>
        </authorList>
    </citation>
    <scope>VARIANTS CADASIL1 TYR-49; CYS-71; CYS-90; CYS-110; CYS-133; CYS-141; ARG-146; CYS-153; CYS-169; CYS-171; CYS-182; ARG-185; SER-212; GLY-222; TYR-224; CYS-258; TYR-542; CYS-558; CYS-578; CYS-728; CYS-985; CYS-1006; CYS-1031; CYS-1231 AND ARG-1261</scope>
    <scope>VARIANTS ARG-170; LEU-496; GLN-1133; MET-1183 AND VAL-2223</scope>
</reference>
<reference key="13">
    <citation type="journal article" date="1999" name="Neurology">
        <title>Quantitative MRI in CADASIL: correlation with disability and cognitive performance.</title>
        <authorList>
            <person name="Dichgans M."/>
            <person name="Filippi M."/>
            <person name="Bruening R."/>
            <person name="Iannucci G."/>
            <person name="Berchtenbreiter C."/>
            <person name="Minicucci L."/>
            <person name="Uttner I."/>
            <person name="Crispin A."/>
            <person name="Ludwig H."/>
            <person name="Gasser T."/>
            <person name="Yousry T.A."/>
        </authorList>
    </citation>
    <scope>VARIANTS CADASIL1 CYS-90; PHE-117; CYS-133; CYS-141; CYS-169; TYR-174; CYS-182 AND ARG-183</scope>
</reference>
<reference key="14">
    <citation type="journal article" date="1999" name="Neurology">
        <title>Diagnostic Notch3 sequence analysis in CADASIL: three new mutations in Dutch patients. Dutch CADASIL Research Group.</title>
        <authorList>
            <consortium name="Dutch CADASIL research group"/>
            <person name="Lesnik Oberstein S.A.J."/>
            <person name="Ferrari M.D."/>
            <person name="Bakker E."/>
            <person name="van Gestel J."/>
            <person name="Kneppers A.L.J."/>
            <person name="Frants R.R."/>
            <person name="Breuning M.H."/>
            <person name="Haan J."/>
        </authorList>
    </citation>
    <scope>VARIANTS CADASIL1 CYS-133; CYS-141; CYS-153; CYS-182; CYS-207; CYS-544 AND ARG-1015</scope>
</reference>
<reference key="15">
    <citation type="journal article" date="2000" name="Eur. J. Hum. Genet.">
        <title>Small in-frame deletions and missense mutations in CADASIL: 3D models predict misfolding of Notch3 EGF-like repeat domains.</title>
        <authorList>
            <person name="Dichgans M."/>
            <person name="Ludwig H."/>
            <person name="Mueller-Hoecker J."/>
            <person name="Messerschmidt A."/>
            <person name="Gasser T."/>
        </authorList>
    </citation>
    <scope>VARIANTS CADASIL1 80-ASP--SER-84 DEL; CYS-90; PHE-93; CYS-110; PHE-117; PHE-123; CYS-133; CYS-141; SER-144; TYR-144; CYS-150; 153-ARG--CYS-155 DEL; CYS-153; CYS-169; TYR-174; CYS-182; ARG-183; SER-183; ARG-185 AND PHE-194</scope>
</reference>
<reference key="16">
    <citation type="journal article" date="2000" name="Hum. Mutat.">
        <title>Identification of a novel mutation C144F in the Notch3 gene in an Australian CADASIL pedigree.</title>
        <authorList>
            <person name="Grigg R."/>
            <person name="Lea R."/>
            <person name="Sullivan A.A."/>
            <person name="Curtain R."/>
            <person name="MacMillian J."/>
            <person name="Griffiths L."/>
        </authorList>
    </citation>
    <scope>VARIANT CADASIL1 PHE-144</scope>
</reference>
<reference key="17">
    <citation type="journal article" date="2000" name="Hum. Mutat.">
        <title>Evaluation of DHPLC analysis in mutational scanning of Notch3, a gene with a high G-C content.</title>
        <authorList>
            <person name="Escary J.-L."/>
            <person name="Cecillon M."/>
            <person name="Maciazek J."/>
            <person name="Lathrop M."/>
            <person name="Tournier-Lasserve E."/>
            <person name="Joutel A."/>
        </authorList>
    </citation>
    <scope>VARIANTS CADASIL1 TYR-49; CYS-54; CYS-90; CYS-110; 114-GLY--PRO-120 DEL; TYR-123; CYS-133; CYS-141; ARG-146; CYS-153; SER-162; CYS-169; TYR-174; CYS-180; CYS-182; ARG-185; TYR-194; TYR-206; CYS-207; SER-212; GLY-222; TYR-224; CYS-258; TYR-542; CYS-558; CYS-578; CYS-607; CYS-728; CYS-984; CYS-985; CYS-1006; CYS-1031; CYS-1231 AND ARG-1261</scope>
</reference>
<reference key="18">
    <citation type="journal article" date="2000" name="Neurology">
        <title>Splice site mutation causing a seven amino acid Notch3 in-frame deletion in CADASIL.</title>
        <authorList>
            <person name="Joutel A."/>
            <person name="Chabriat H."/>
            <person name="Vahedi K."/>
            <person name="Domenga V."/>
            <person name="Vayssiere C."/>
            <person name="Ruchoux M.M."/>
            <person name="Lucas C."/>
            <person name="Leys D."/>
            <person name="Bousser M.-G."/>
            <person name="Tournier-Lasserve E."/>
        </authorList>
    </citation>
    <scope>VARIANT CADASIL1 114-GLY--PRO-120 DEL</scope>
</reference>
<reference key="19">
    <citation type="journal article" date="2001" name="Arch. Neurol.">
        <title>A novel mutation in the Notch3 gene in an Italian family with cerebral autosomal dominant arteriopathy with subcortical infarcts and leukoencephalopathy: genetic and magnetic resonance spectroscopic findings.</title>
        <authorList>
            <person name="Oliveri R.L."/>
            <person name="Muglia M."/>
            <person name="De Stefano N."/>
            <person name="Mazzei R."/>
            <person name="Labate A."/>
            <person name="Conforti F.L."/>
            <person name="Patitucci A."/>
            <person name="Gabriele A.L."/>
            <person name="Tagarelli G."/>
            <person name="Magariello A."/>
            <person name="Zappia M."/>
            <person name="Gambardella A."/>
            <person name="Federico A."/>
            <person name="Quattrone A."/>
        </authorList>
    </citation>
    <scope>VARIANT CADASIL1 CYS-332</scope>
</reference>
<reference key="20">
    <citation type="journal article" date="2001" name="Lancet">
        <title>Skin biopsy immunostaining with a Notch3 monoclonal antibody for CADASIL diagnosis.</title>
        <authorList>
            <person name="Joutel A."/>
            <person name="Favrole P."/>
            <person name="Labauge P."/>
            <person name="Chabriat H."/>
            <person name="Lescoat C."/>
            <person name="Andreux F."/>
            <person name="Domenga V."/>
            <person name="Cecillon M."/>
            <person name="Vahedi K."/>
            <person name="Ducros A."/>
            <person name="Cave-Riant F."/>
            <person name="Bousser M.G."/>
            <person name="Tournier-Lasserve E."/>
        </authorList>
    </citation>
    <scope>VARIANTS CADASIL1 CYS-110; CYS-133; TRP-134; CYS-141; CYS-153; CYS-182; GLY-185; CYS-207; SER-212; GLY-222; SER-428; CYS-558; CYS-985 AND CYS-1063</scope>
</reference>
<reference key="21">
    <citation type="journal article" date="2002" name="Acta Neuropathol.">
        <title>Reversible coma with raised intracranial pressure: an unusual clinical manifestation of CADASIL.</title>
        <authorList>
            <person name="Feuerhake F."/>
            <person name="Volk B."/>
            <person name="Ostertag C.B."/>
            <person name="Jungling F.D."/>
            <person name="Kassubek J."/>
            <person name="Orszagh M."/>
            <person name="Dichgans M."/>
        </authorList>
    </citation>
    <scope>VARIANT CADASIL1 TRP-134</scope>
</reference>
<reference key="22">
    <citation type="journal article" date="2002" name="Brain Pathol.">
        <title>CADASIL: a common form of hereditary arteriopathy causing brain infarcts and dementia.</title>
        <authorList>
            <person name="Kalimo H."/>
            <person name="Ruchoux M.-M."/>
            <person name="Viitanen M."/>
            <person name="Kalaria R.N."/>
        </authorList>
    </citation>
    <scope>VARIANTS CADASIL1 ARG-76; TYR-93; TYR-128; CYS-142; ARG-194; TYR-222; SER-233; ARG-251; CYS-420; GLY-440; CYS-449; CYS-953 AND CYS-1021</scope>
</reference>
<reference key="23">
    <citation type="journal article" date="2002" name="Neurology">
        <title>C455R notch3 mutation in a Colombian CADASIL kindred with early onset of stroke.</title>
        <authorList>
            <person name="Arboleda-Velasquez J.F."/>
            <person name="Lopera F."/>
            <person name="Lopez E."/>
            <person name="Frosch M.P."/>
            <person name="Sepulveda-Falla D."/>
            <person name="Gutierrez J.E."/>
            <person name="Vargas S."/>
            <person name="Medina M."/>
            <person name="Martinez De Arrieta C."/>
            <person name="Lebo R.V."/>
            <person name="Slaugenhaupt S.A."/>
            <person name="Betensky R.A."/>
            <person name="Villegas A."/>
            <person name="Arcos-Burgos M."/>
            <person name="Rivera D."/>
            <person name="Restrepo J.C."/>
            <person name="Kosik K.S."/>
        </authorList>
    </citation>
    <scope>VARIANT CADASIL1 ARG-455</scope>
</reference>
<reference key="24">
    <citation type="journal article" date="2003" name="J. Korean Med. Sci.">
        <title>A novel mutation (C67Y)in the NOTCH3 gene in a Korean CADASIL patient.</title>
        <authorList>
            <person name="Moon S.-Y."/>
            <person name="Kim H.-Y."/>
            <person name="Seok J.-I."/>
            <person name="Kwon J.-C."/>
            <person name="Ki C.-S."/>
            <person name="Kim J.-W."/>
            <person name="Suh Y.-L."/>
            <person name="Na D.L."/>
        </authorList>
    </citation>
    <scope>VARIANT CADASIL1 TYR-67</scope>
</reference>
<reference key="25">
    <citation type="journal article" date="2003" name="J. Neurol. Sci.">
        <title>Genetic, clinical and pathological studies of CADASIL in Japan: a partial contribution of Notch3 mutations and implications of smooth muscle cell degeneration for the pathogenesis.</title>
        <authorList>
            <person name="Santa Y."/>
            <person name="Uyama E."/>
            <person name="Chui D.H."/>
            <person name="Arima M."/>
            <person name="Kotorii S."/>
            <person name="Takahashi K."/>
            <person name="Tabira T."/>
        </authorList>
    </citation>
    <scope>VARIANTS CADASIL1 CYS-90; CYS-133; CYS-169; ARG-174; PHE-174 AND LYS-213</scope>
</reference>
<reference key="26">
    <citation type="journal article" date="2004" name="Brain">
        <title>The influence of genetic and cardiovascular risk factors on the CADASIL phenotype.</title>
        <authorList>
            <person name="Singhal S."/>
            <person name="Bevan S."/>
            <person name="Barrick T."/>
            <person name="Rich P."/>
            <person name="Markus H.S."/>
        </authorList>
    </citation>
    <scope>VARIANTS CADASIL1 ARG-76; CYS-90; CYS-110; CYS-141; CYS-153; CYS-169; CYS-182; ARG-183; CYS-189; SER-194; CYS-207; ARG-251; CYS-332; GLY-440; CYS-607; CYS-953 AND CYS-1231</scope>
</reference>
<reference key="27">
    <citation type="journal article" date="2004" name="Brain">
        <title>Long-term prognosis and causes of death in CADASIL: a retrospective study in 411 patients.</title>
        <authorList>
            <person name="Opherk C."/>
            <person name="Peters N."/>
            <person name="Herzog J."/>
            <person name="Luedtke R."/>
            <person name="Dichgans M."/>
        </authorList>
    </citation>
    <scope>VARIANTS CADASIL1 GLY-43; PHE-49; CYS-60; SER-65; TRP-76; 77-GLN--CYS-82 DEL; 80-ASP--SER-84 DEL; ARG-87; TYR-87; CYS-90; PHE-93; TRP-106; TYR-108; CYS-110; PHE-117; PHE-123; CYS-133; TRP-134; CYS-141; SER-144; TYR-144; CYS-145; CYS-149; CYS-150; 153-ARG--CYS-155 DEL; CYS-153; SER-155; CYS-169; ARG-174; TYR-174; CYS-182; ARG-183; SER-183; PHE-183; ARG-185; PHE-194; TYR-201; CYS-207; TYR-233; 239-ASP--ASP-253 DEL; SER-240; ARG-245; TYR-260; CYS-332; CYS-335; CYS-337; SER-379; ARG-395; CYS-421; TYR-428; ARG-440; SER-446; TYR-484; TYR-495; ARG-511; TYR-549; CYS-558; CYS-985 AND TYR-1261</scope>
</reference>
<reference key="28">
    <citation type="journal article" date="2004" name="Eur. J. Hum. Genet.">
        <title>Detection of the founder effect in Finnish CADASIL families.</title>
        <authorList>
            <person name="Mykkaenen K."/>
            <person name="Savontaus M.L."/>
            <person name="Juvonen V."/>
            <person name="Sistonen P."/>
            <person name="Tuisku S."/>
            <person name="Tuominen S."/>
            <person name="Penttinen M."/>
            <person name="Lundkvist J."/>
            <person name="Viitanen M."/>
            <person name="Kalimo H."/>
            <person name="Peoyhoenen M."/>
        </authorList>
    </citation>
    <scope>VARIANT CADASIL1 CYS-133</scope>
</reference>
<reference key="29">
    <citation type="journal article" date="2004" name="Exp. Cell Res.">
        <title>CADASIL-associated Notch3 mutations have differential effects both on ligand binding and ligand-induced Notch3 receptor signaling through RBP-Jk.</title>
        <authorList>
            <person name="Peters N."/>
            <person name="Opherk C."/>
            <person name="Zacherle S."/>
            <person name="Capell A."/>
            <person name="Gempel P."/>
            <person name="Dichgans M."/>
        </authorList>
    </citation>
    <scope>CHARACTERIZATION OF VARIANTS CADASIL1 CYS-133; SER-183 AND ARG-455</scope>
    <scope>FUNCTION</scope>
    <scope>SUBCELLULAR LOCATION</scope>
    <scope>LIGAND-BINDING DOMAIN</scope>
    <scope>PROTEOLYTIC PROCESSING</scope>
</reference>
<reference key="30">
    <citation type="journal article" date="2004" name="Hum. Genet.">
        <title>Gene symbol: NOTCH3. Disease: CADASIL.</title>
        <authorList>
            <person name="Rojas-Marcos I."/>
            <person name="Encarnacion M."/>
            <person name="Martinez-Yelamos S."/>
            <person name="Ferrer I."/>
            <person name="Arbizu T."/>
            <person name="Gil-Peralta A."/>
            <person name="Garcia-Lozano J.R."/>
        </authorList>
    </citation>
    <scope>VARIANT CADASIL1 TRP-108</scope>
</reference>
<reference key="31">
    <citation type="journal article" date="2005" name="Arch. Neurol.">
        <title>Spectrum of mutations in biopsy-proven CADASIL: implications for diagnostic strategies.</title>
        <authorList>
            <person name="Peters N."/>
            <person name="Opherk C."/>
            <person name="Bergmann T."/>
            <person name="Castro M."/>
            <person name="Herzog J."/>
            <person name="Dichgans M."/>
        </authorList>
    </citation>
    <scope>VARIANTS CADASIL1 GLY-43; PHE-49; CYS-60; SER-65; TRP-76; 80-ASP--SER-84 DEL; ARG-87; CYS-90; PHE-93; TYR-108; CYS-110; PHE-117; PHE-123; CYS-133; TRP-134; CYS-141; SER-144; TYR-144; CYS-149; CYS-150; CYS-153; 153-ARG--CYS-155 DEL; CYS-169; ARG-174; TYR-174; CYS-182; SER-183; PHE-183; ARG-185; PHE-194; CYS-207; TYR-233; SER-240; ARG-245; TYR-260; 239-ASP--ASP-253 DEL; CYS-319; CYS-332; CYS-335; CYS-337; SER-379; ARG-395; CYS-421; TYR-428; ARG-440; PHE-484; TYR-495; ARG-511; TYR-549; CYS-558; CYS-728; SER-775; CYS-985 AND TYR-1261</scope>
</reference>
<reference key="32">
    <citation type="journal article" date="2005" name="Hum. Genet.">
        <title>Gene symbol: NOTCH3. Disease: cerebral autosomal dominant arteriopathy with subcortical infarcts and leukoencephalopathy.</title>
        <authorList>
            <person name="Soong B.W."/>
            <person name="Lee Y.-C."/>
            <person name="Lu Y.-C."/>
        </authorList>
    </citation>
    <scope>VARIANT CADASIL1 CYS-118</scope>
</reference>
<reference key="33">
    <citation type="journal article" date="2008" name="Hum. Mutat.">
        <title>Activating NOTCH3 mutation in a patient with small-vessel-disease of the brain.</title>
        <authorList>
            <person name="Fouillade C."/>
            <person name="Chabriat H."/>
            <person name="Riant F."/>
            <person name="Mine M."/>
            <person name="Arnoud M."/>
            <person name="Magy L."/>
            <person name="Bousser M.G."/>
            <person name="Tournier-Lasserve E."/>
            <person name="Joutel A."/>
        </authorList>
    </citation>
    <scope>VARIANT BRAIN SMALL-VESSEL-DISEASE PRO-1515</scope>
</reference>
<reference key="34">
    <citation type="journal article" date="2013" name="Am. J. Hum. Genet.">
        <title>Mutations in PDGFRB cause autosomal-dominant infantile myofibromatosis.</title>
        <authorList>
            <person name="Martignetti J.A."/>
            <person name="Tian L."/>
            <person name="Li D."/>
            <person name="Ramirez M.C."/>
            <person name="Camacho-Vanegas O."/>
            <person name="Camacho S.C."/>
            <person name="Guo Y."/>
            <person name="Zand D.J."/>
            <person name="Bernstein A.M."/>
            <person name="Masur S.K."/>
            <person name="Kim C.E."/>
            <person name="Otieno F.G."/>
            <person name="Hou C."/>
            <person name="Abdel-Magid N."/>
            <person name="Tweddale B."/>
            <person name="Metry D."/>
            <person name="Fournet J.C."/>
            <person name="Papp E."/>
            <person name="McPherson E.W."/>
            <person name="Zabel C."/>
            <person name="Vaksmann G."/>
            <person name="Morisot C."/>
            <person name="Keating B."/>
            <person name="Sleiman P.M."/>
            <person name="Cleveland J.A."/>
            <person name="Everman D.B."/>
            <person name="Zackai E."/>
            <person name="Hakonarson H."/>
        </authorList>
    </citation>
    <scope>VARIANT IMF2 PRO-1519</scope>
</reference>
<reference key="35">
    <citation type="journal article" date="2013" name="Hum. Mutat.">
        <title>Hypomorphic NOTCH3 alleles do not cause CADASIL in humans.</title>
        <authorList>
            <person name="Rutten J.W."/>
            <person name="Boon E.M."/>
            <person name="Liem M.K."/>
            <person name="Dauwerse J.G."/>
            <person name="Pont M.J."/>
            <person name="Vollebregt E."/>
            <person name="Maat-Kievit A.J."/>
            <person name="Ginjaar H.B."/>
            <person name="Lakeman P."/>
            <person name="van Duinen S.G."/>
            <person name="Terwindt G.M."/>
            <person name="Lesnik Oberstein S.A."/>
        </authorList>
    </citation>
    <scope>VARIANT CADASIL1 CYS-710</scope>
</reference>
<sequence length="2321" mass="243631">MGPGARGRRRRRRPMSPPPPPPPVRALPLLLLLAGPGAAAPPCLDGSPCANGGRCTQLPSREAACLCPPGWVGERCQLEDPCHSGPCAGRGVCQSSVVAGTARFSCRCPRGFRGPDCSLPDPCLSSPCAHGARCSVGPDGRFLCSCPPGYQGRSCRSDVDECRVGEPCRHGGTCLNTPGSFRCQCPAGYTGPLCENPAVPCAPSPCRNGGTCRQSGDLTYDCACLPGFEGQNCEVNVDDCPGHRCLNGGTCVDGVNTYNCQCPPEWTGQFCTEDVDECQLQPNACHNGGTCFNTLGGHSCVCVNGWTGESCSQNIDDCATAVCFHGATCHDRVASFYCACPMGKTGLLCHLDDACVSNPCHEDAICDTNPVNGRAICTCPPGFTGGACDQDVDECSIGANPCEHLGRCVNTQGSFLCQCGRGYTGPRCETDVNECLSGPCRNQATCLDRIGQFTCICMAGFTGTYCEVDIDECQSSPCVNGGVCKDRVNGFSCTCPSGFSGSTCQLDVDECASTPCRNGAKCVDQPDGYECRCAEGFEGTLCDRNVDDCSPDPCHHGRCVDGIASFSCACAPGYTGTRCESQVDECRSQPCRHGGKCLDLVDKYLCRCPSGTTGVNCEVNIDDCASNPCTFGVCRDGINRYDCVCQPGFTGPLCNVEINECASSPCGEGGSCVDGENGFRCLCPPGSLPPLCLPPSHPCAHEPCSHGICYDAPGGFRCVCEPGWSGPRCSQSLARDACESQPCRAGGTCSSDGMGFHCTCPPGVQGRQCELLSPCTPNPCEHGGRCESAPGQLPVCSCPQGWQGPRCQQDVDECAGPAPCGPHGICTNLAGSFSCTCHGGYTGPSCDQDINDCDPNPCLNGGSCQDGVGSFSCSCLPGFAGPRCARDVDECLSNPCGPGTCTDHVASFTCTCPPGYGGFHCEQDLPDCSPSSCFNGGTCVDGVNSFSCLCRPGYTGAHCQHEADPCLSRPCLHGGVCSAAHPGFRCTCLESFTGPQCQTLVDWCSRQPCQNGGRCVQTGAYCLCPPGWSGRLCDIRSLPCREAAAQIGVRLEQLCQAGGQCVDEDSSHYCVCPEGRTGSHCEQEVDPCLAQPCQHGGTCRGYMGGYMCECLPGYNGDNCEDDVDECASQPCQHGGSCIDLVARYLCSCPPGTLGVLCEINEDDCGPGPPLDSGPRCLHNGTCVDLVGGFRCTCPPGYTGLRCEADINECRSGACHAAHTRDCLQDPGGGFRCLCHAGFSGPRCQTVLSPCESQPCQHGGQCRPSPGPGGGLTFTCHCAQPFWGPRCERVARSCRELQCPVGVPCQQTPRGPRCACPPGLSGPSCRSFPGSPPGASNASCAAAPCLHGGSCRPAPLAPFFRCACAQGWTGPRCEAPAAAPEVSEEPRCPRAACQAKRGDQRCDRECNSPGCGWDGGDCSLSVGDPWRQCEALQCWRLFNNSRCDPACSSPACLYDNFDCHAGGRERTCNPVYEKYCADHFADGRCDQGCNTEECGWDGLDCASEVPALLARGVLVLTVLLPPEELLRSSADFLQRLSAILRTSLRFRLDAHGQAMVFPYHRPSPGSEPRARRELAPEVIGSVVMLEIDNRLCLQSPENDHCFPDAQSAADYLGALSAVERLDFPYPLRDVRGEPLEPPEPSVPLLPLLVAGAVLLLVILVLGVMVARRKREHSTLWFPEGFSLHKDVASGHKGRREPVGQDALGMKNMAKGESLMGEVATDWMDTECPEAKRLKVEEPGMGAEEAVDCRQWTQHHLVAADIRVAPAMALTPPQGDADADGMDVNVRGPDGFTPLMLASFCGGALEPMPTEEDEADDTSASIISDLICQGAQLGARTDRTGETALHLAARYARADAAKRLLDAGADTNAQDHSGRTPLHTAVTADAQGVFQILIRNRSTDLDARMADGSTALILAARLAVEGMVEELIASHADVNAVDELGKSALHWAAAVNNVEATLALLKNGANKDMQDSKEETPLFLAAREGSYEAAKLLLDHFANREITDHLDRLPRDVAQERLHQDIVRLLDQPSGPRSPPGPHGLGPLLCPPGAFLPGLKAAQSGSKKSRRPPGKAGLGPQGPRGRGKKLTLACPGPLADSSVTLSPVDSLDSPRPFGGPPASPGGFPLEGPYAAATATAVSLAQLGGPGRAGLGRQPPGGCVLSLGLLNPVAVPLDWARLPPPAPPGPSFLLPLAPGPQLLNPGTPVSPQERPPPYLAVPGHGEEYPAAGAHSSPPKARFLRVPSEHPYLTPSPESPEHWASPSPPSLSDWSESTPSPATATGAMATTTGALPAQPLPLSVPSSLAQAQTQLGPQPEVTPKRQVLA</sequence>
<keyword id="KW-0002">3D-structure</keyword>
<keyword id="KW-0010">Activator</keyword>
<keyword id="KW-0040">ANK repeat</keyword>
<keyword id="KW-1003">Cell membrane</keyword>
<keyword id="KW-0217">Developmental protein</keyword>
<keyword id="KW-0221">Differentiation</keyword>
<keyword id="KW-0225">Disease variant</keyword>
<keyword id="KW-1015">Disulfide bond</keyword>
<keyword id="KW-0245">EGF-like domain</keyword>
<keyword id="KW-0325">Glycoprotein</keyword>
<keyword id="KW-0472">Membrane</keyword>
<keyword id="KW-0488">Methylation</keyword>
<keyword id="KW-0914">Notch signaling pathway</keyword>
<keyword id="KW-0539">Nucleus</keyword>
<keyword id="KW-0597">Phosphoprotein</keyword>
<keyword id="KW-1267">Proteomics identification</keyword>
<keyword id="KW-0675">Receptor</keyword>
<keyword id="KW-1185">Reference proteome</keyword>
<keyword id="KW-0677">Repeat</keyword>
<keyword id="KW-0732">Signal</keyword>
<keyword id="KW-0804">Transcription</keyword>
<keyword id="KW-0805">Transcription regulation</keyword>
<keyword id="KW-0812">Transmembrane</keyword>
<keyword id="KW-1133">Transmembrane helix</keyword>
<evidence type="ECO:0000250" key="1"/>
<evidence type="ECO:0000250" key="2">
    <source>
        <dbReference type="UniProtKB" id="Q9R172"/>
    </source>
</evidence>
<evidence type="ECO:0000255" key="3"/>
<evidence type="ECO:0000255" key="4">
    <source>
        <dbReference type="PROSITE-ProRule" id="PRU00076"/>
    </source>
</evidence>
<evidence type="ECO:0000256" key="5">
    <source>
        <dbReference type="SAM" id="MobiDB-lite"/>
    </source>
</evidence>
<evidence type="ECO:0000269" key="6">
    <source>
    </source>
</evidence>
<evidence type="ECO:0000269" key="7">
    <source>
    </source>
</evidence>
<evidence type="ECO:0000269" key="8">
    <source>
    </source>
</evidence>
<evidence type="ECO:0000269" key="9">
    <source>
    </source>
</evidence>
<evidence type="ECO:0000269" key="10">
    <source>
    </source>
</evidence>
<evidence type="ECO:0000269" key="11">
    <source>
    </source>
</evidence>
<evidence type="ECO:0000269" key="12">
    <source>
    </source>
</evidence>
<evidence type="ECO:0000269" key="13">
    <source>
    </source>
</evidence>
<evidence type="ECO:0000269" key="14">
    <source>
    </source>
</evidence>
<evidence type="ECO:0000269" key="15">
    <source>
    </source>
</evidence>
<evidence type="ECO:0000269" key="16">
    <source>
    </source>
</evidence>
<evidence type="ECO:0000269" key="17">
    <source>
    </source>
</evidence>
<evidence type="ECO:0000269" key="18">
    <source>
    </source>
</evidence>
<evidence type="ECO:0000269" key="19">
    <source>
    </source>
</evidence>
<evidence type="ECO:0000269" key="20">
    <source>
    </source>
</evidence>
<evidence type="ECO:0000269" key="21">
    <source>
    </source>
</evidence>
<evidence type="ECO:0000269" key="22">
    <source>
    </source>
</evidence>
<evidence type="ECO:0000269" key="23">
    <source>
    </source>
</evidence>
<evidence type="ECO:0000269" key="24">
    <source>
    </source>
</evidence>
<evidence type="ECO:0000269" key="25">
    <source>
    </source>
</evidence>
<evidence type="ECO:0000269" key="26">
    <source>
    </source>
</evidence>
<evidence type="ECO:0000269" key="27">
    <source>
    </source>
</evidence>
<evidence type="ECO:0000269" key="28">
    <source>
    </source>
</evidence>
<evidence type="ECO:0000269" key="29">
    <source>
    </source>
</evidence>
<evidence type="ECO:0000269" key="30">
    <source>
    </source>
</evidence>
<evidence type="ECO:0000269" key="31">
    <source>
    </source>
</evidence>
<evidence type="ECO:0000269" key="32">
    <source>
    </source>
</evidence>
<evidence type="ECO:0000269" key="33">
    <source>
    </source>
</evidence>
<evidence type="ECO:0000269" key="34">
    <source>
    </source>
</evidence>
<evidence type="ECO:0000269" key="35">
    <source>
    </source>
</evidence>
<evidence type="ECO:0000269" key="36">
    <source>
    </source>
</evidence>
<evidence type="ECO:0000305" key="37"/>
<evidence type="ECO:0007744" key="38">
    <source>
    </source>
</evidence>
<evidence type="ECO:0007829" key="39">
    <source>
        <dbReference type="PDB" id="4ZLP"/>
    </source>
</evidence>
<evidence type="ECO:0007829" key="40">
    <source>
        <dbReference type="PDB" id="5CZV"/>
    </source>
</evidence>
<evidence type="ECO:0007829" key="41">
    <source>
        <dbReference type="PDB" id="5CZX"/>
    </source>
</evidence>
<evidence type="ECO:0007829" key="42">
    <source>
        <dbReference type="PDB" id="6XSW"/>
    </source>
</evidence>
<evidence type="ECO:0007829" key="43">
    <source>
        <dbReference type="PDB" id="8OS0"/>
    </source>
</evidence>
<gene>
    <name type="primary">NOTCH3</name>
</gene>
<proteinExistence type="evidence at protein level"/>
<feature type="signal peptide" evidence="3">
    <location>
        <begin position="1"/>
        <end position="39"/>
    </location>
</feature>
<feature type="chain" id="PRO_0000007692" description="Neurogenic locus notch homolog protein 3">
    <location>
        <begin position="40"/>
        <end position="2321"/>
    </location>
</feature>
<feature type="chain" id="PRO_0000007693" description="Notch 3 extracellular truncation" evidence="1">
    <location>
        <begin position="1629"/>
        <end position="2321"/>
    </location>
</feature>
<feature type="chain" id="PRO_0000007694" description="Notch 3 intracellular domain" evidence="1">
    <location>
        <begin position="1662"/>
        <end position="2321"/>
    </location>
</feature>
<feature type="topological domain" description="Extracellular" evidence="3">
    <location>
        <begin position="40"/>
        <end position="1643"/>
    </location>
</feature>
<feature type="transmembrane region" description="Helical" evidence="3">
    <location>
        <begin position="1644"/>
        <end position="1664"/>
    </location>
</feature>
<feature type="topological domain" description="Cytoplasmic" evidence="3">
    <location>
        <begin position="1665"/>
        <end position="2321"/>
    </location>
</feature>
<feature type="domain" description="EGF-like 1" evidence="4">
    <location>
        <begin position="40"/>
        <end position="77"/>
    </location>
</feature>
<feature type="domain" description="EGF-like 2" evidence="4">
    <location>
        <begin position="78"/>
        <end position="118"/>
    </location>
</feature>
<feature type="domain" description="EGF-like 3" evidence="4">
    <location>
        <begin position="119"/>
        <end position="156"/>
    </location>
</feature>
<feature type="domain" description="EGF-like 4; calcium-binding" evidence="4">
    <location>
        <begin position="158"/>
        <end position="195"/>
    </location>
</feature>
<feature type="domain" description="EGF-like 5" evidence="4">
    <location>
        <begin position="197"/>
        <end position="234"/>
    </location>
</feature>
<feature type="domain" description="EGF-like 6; calcium-binding" evidence="4">
    <location>
        <begin position="236"/>
        <end position="272"/>
    </location>
</feature>
<feature type="domain" description="EGF-like 7" evidence="4">
    <location>
        <begin position="274"/>
        <end position="312"/>
    </location>
</feature>
<feature type="domain" description="EGF-like 8; calcium-binding" evidence="4">
    <location>
        <begin position="314"/>
        <end position="350"/>
    </location>
</feature>
<feature type="domain" description="EGF-like 9" evidence="4">
    <location>
        <begin position="351"/>
        <end position="389"/>
    </location>
</feature>
<feature type="domain" description="EGF-like 10; calcium-binding" evidence="4">
    <location>
        <begin position="391"/>
        <end position="429"/>
    </location>
</feature>
<feature type="domain" description="EGF-like 11; calcium-binding" evidence="4">
    <location>
        <begin position="431"/>
        <end position="467"/>
    </location>
</feature>
<feature type="domain" description="EGF-like 12; calcium-binding" evidence="4">
    <location>
        <begin position="469"/>
        <end position="505"/>
    </location>
</feature>
<feature type="domain" description="EGF-like 13; calcium-binding" evidence="4">
    <location>
        <begin position="507"/>
        <end position="543"/>
    </location>
</feature>
<feature type="domain" description="EGF-like 14; calcium-binding" evidence="4">
    <location>
        <begin position="545"/>
        <end position="580"/>
    </location>
</feature>
<feature type="domain" description="EGF-like 15; calcium-binding" evidence="4">
    <location>
        <begin position="582"/>
        <end position="618"/>
    </location>
</feature>
<feature type="domain" description="EGF-like 16; calcium-binding" evidence="4">
    <location>
        <begin position="620"/>
        <end position="655"/>
    </location>
</feature>
<feature type="domain" description="EGF-like 17; calcium-binding" evidence="4">
    <location>
        <begin position="657"/>
        <end position="693"/>
    </location>
</feature>
<feature type="domain" description="EGF-like 18" evidence="4">
    <location>
        <begin position="695"/>
        <end position="730"/>
    </location>
</feature>
<feature type="domain" description="EGF-like 19" evidence="4">
    <location>
        <begin position="734"/>
        <end position="770"/>
    </location>
</feature>
<feature type="domain" description="EGF-like 20" evidence="4">
    <location>
        <begin position="771"/>
        <end position="808"/>
    </location>
</feature>
<feature type="domain" description="EGF-like 21; calcium-binding" evidence="4">
    <location>
        <begin position="810"/>
        <end position="847"/>
    </location>
</feature>
<feature type="domain" description="EGF-like 22; calcium-binding" evidence="4">
    <location>
        <begin position="849"/>
        <end position="885"/>
    </location>
</feature>
<feature type="domain" description="EGF-like 23; calcium-binding" evidence="4">
    <location>
        <begin position="887"/>
        <end position="922"/>
    </location>
</feature>
<feature type="domain" description="EGF-like 24" evidence="4">
    <location>
        <begin position="924"/>
        <end position="960"/>
    </location>
</feature>
<feature type="domain" description="EGF-like 25" evidence="4">
    <location>
        <begin position="962"/>
        <end position="998"/>
    </location>
</feature>
<feature type="domain" description="EGF-like 26" evidence="4">
    <location>
        <begin position="1000"/>
        <end position="1034"/>
    </location>
</feature>
<feature type="domain" description="EGF-like 27" evidence="37">
    <location>
        <begin position="1036"/>
        <end position="1082"/>
    </location>
</feature>
<feature type="domain" description="EGF-like 28" evidence="4">
    <location>
        <begin position="1084"/>
        <end position="1120"/>
    </location>
</feature>
<feature type="domain" description="EGF-like 29; calcium-binding" evidence="4">
    <location>
        <begin position="1122"/>
        <end position="1158"/>
    </location>
</feature>
<feature type="domain" description="EGF-like 30; calcium-binding" evidence="4">
    <location>
        <begin position="1160"/>
        <end position="1203"/>
    </location>
</feature>
<feature type="domain" description="EGF-like 31" evidence="4">
    <location>
        <begin position="1205"/>
        <end position="1244"/>
    </location>
</feature>
<feature type="domain" description="EGF-like 32" evidence="4">
    <location>
        <begin position="1246"/>
        <end position="1287"/>
    </location>
</feature>
<feature type="domain" description="EGF-like 33" evidence="4">
    <location>
        <begin position="1289"/>
        <end position="1325"/>
    </location>
</feature>
<feature type="domain" description="EGF-like 34" evidence="4">
    <location>
        <begin position="1335"/>
        <end position="1373"/>
    </location>
</feature>
<feature type="repeat" description="LNR 1">
    <location>
        <begin position="1387"/>
        <end position="1427"/>
    </location>
</feature>
<feature type="repeat" description="LNR 2">
    <location>
        <begin position="1428"/>
        <end position="1458"/>
    </location>
</feature>
<feature type="repeat" description="LNR 3">
    <location>
        <begin position="1467"/>
        <end position="1505"/>
    </location>
</feature>
<feature type="repeat" description="ANK 1">
    <location>
        <begin position="1838"/>
        <end position="1867"/>
    </location>
</feature>
<feature type="repeat" description="ANK 2">
    <location>
        <begin position="1871"/>
        <end position="1901"/>
    </location>
</feature>
<feature type="repeat" description="ANK 3">
    <location>
        <begin position="1905"/>
        <end position="1934"/>
    </location>
</feature>
<feature type="repeat" description="ANK 4">
    <location>
        <begin position="1938"/>
        <end position="1967"/>
    </location>
</feature>
<feature type="repeat" description="ANK 5">
    <location>
        <begin position="1971"/>
        <end position="2000"/>
    </location>
</feature>
<feature type="region of interest" description="Disordered" evidence="5">
    <location>
        <begin position="1"/>
        <end position="26"/>
    </location>
</feature>
<feature type="region of interest" description="Disordered" evidence="5">
    <location>
        <begin position="2024"/>
        <end position="2120"/>
    </location>
</feature>
<feature type="region of interest" description="Disordered" evidence="5">
    <location>
        <begin position="2190"/>
        <end position="2321"/>
    </location>
</feature>
<feature type="compositionally biased region" description="Basic residues" evidence="5">
    <location>
        <begin position="1"/>
        <end position="14"/>
    </location>
</feature>
<feature type="compositionally biased region" description="Pro residues" evidence="5">
    <location>
        <begin position="15"/>
        <end position="25"/>
    </location>
</feature>
<feature type="compositionally biased region" description="Low complexity" evidence="5">
    <location>
        <begin position="2039"/>
        <end position="2053"/>
    </location>
</feature>
<feature type="compositionally biased region" description="Low complexity" evidence="5">
    <location>
        <begin position="2269"/>
        <end position="2289"/>
    </location>
</feature>
<feature type="compositionally biased region" description="Polar residues" evidence="5">
    <location>
        <begin position="2296"/>
        <end position="2308"/>
    </location>
</feature>
<feature type="site" description="Cleavage; by furin-like protease" evidence="1">
    <location>
        <begin position="1571"/>
        <end position="1572"/>
    </location>
</feature>
<feature type="modified residue" description="Omega-N-methylarginine" evidence="38">
    <location>
        <position position="2174"/>
    </location>
</feature>
<feature type="glycosylation site" description="N-linked (GlcNAc...) asparagine" evidence="3">
    <location>
        <position position="1179"/>
    </location>
</feature>
<feature type="glycosylation site" description="N-linked (GlcNAc...) asparagine" evidence="3">
    <location>
        <position position="1336"/>
    </location>
</feature>
<feature type="glycosylation site" description="N-linked (GlcNAc...) asparagine" evidence="3">
    <location>
        <position position="1438"/>
    </location>
</feature>
<feature type="disulfide bond" evidence="1">
    <location>
        <begin position="43"/>
        <end position="55"/>
    </location>
</feature>
<feature type="disulfide bond" evidence="1">
    <location>
        <begin position="49"/>
        <end position="65"/>
    </location>
</feature>
<feature type="disulfide bond" evidence="1">
    <location>
        <begin position="67"/>
        <end position="76"/>
    </location>
</feature>
<feature type="disulfide bond" evidence="1">
    <location>
        <begin position="82"/>
        <end position="93"/>
    </location>
</feature>
<feature type="disulfide bond" evidence="1">
    <location>
        <begin position="87"/>
        <end position="106"/>
    </location>
</feature>
<feature type="disulfide bond" evidence="1">
    <location>
        <begin position="108"/>
        <end position="117"/>
    </location>
</feature>
<feature type="disulfide bond" evidence="1">
    <location>
        <begin position="123"/>
        <end position="134"/>
    </location>
</feature>
<feature type="disulfide bond" evidence="1">
    <location>
        <begin position="128"/>
        <end position="144"/>
    </location>
</feature>
<feature type="disulfide bond" evidence="1">
    <location>
        <begin position="146"/>
        <end position="155"/>
    </location>
</feature>
<feature type="disulfide bond" evidence="1">
    <location>
        <begin position="162"/>
        <end position="174"/>
    </location>
</feature>
<feature type="disulfide bond" evidence="1">
    <location>
        <begin position="168"/>
        <end position="183"/>
    </location>
</feature>
<feature type="disulfide bond" evidence="1">
    <location>
        <begin position="185"/>
        <end position="194"/>
    </location>
</feature>
<feature type="disulfide bond" evidence="1">
    <location>
        <begin position="201"/>
        <end position="212"/>
    </location>
</feature>
<feature type="disulfide bond" evidence="1">
    <location>
        <begin position="206"/>
        <end position="222"/>
    </location>
</feature>
<feature type="disulfide bond" evidence="1">
    <location>
        <begin position="224"/>
        <end position="233"/>
    </location>
</feature>
<feature type="disulfide bond" evidence="1">
    <location>
        <begin position="240"/>
        <end position="251"/>
    </location>
</feature>
<feature type="disulfide bond" evidence="1">
    <location>
        <begin position="245"/>
        <end position="260"/>
    </location>
</feature>
<feature type="disulfide bond" evidence="1">
    <location>
        <begin position="262"/>
        <end position="271"/>
    </location>
</feature>
<feature type="disulfide bond" evidence="1">
    <location>
        <begin position="278"/>
        <end position="291"/>
    </location>
</feature>
<feature type="disulfide bond" evidence="1">
    <location>
        <begin position="285"/>
        <end position="300"/>
    </location>
</feature>
<feature type="disulfide bond" evidence="1">
    <location>
        <begin position="302"/>
        <end position="311"/>
    </location>
</feature>
<feature type="disulfide bond" evidence="1">
    <location>
        <begin position="318"/>
        <end position="329"/>
    </location>
</feature>
<feature type="disulfide bond" evidence="1">
    <location>
        <begin position="323"/>
        <end position="338"/>
    </location>
</feature>
<feature type="disulfide bond" evidence="1">
    <location>
        <begin position="340"/>
        <end position="349"/>
    </location>
</feature>
<feature type="disulfide bond" evidence="1">
    <location>
        <begin position="355"/>
        <end position="366"/>
    </location>
</feature>
<feature type="disulfide bond" evidence="1">
    <location>
        <begin position="360"/>
        <end position="377"/>
    </location>
</feature>
<feature type="disulfide bond" evidence="1">
    <location>
        <begin position="379"/>
        <end position="388"/>
    </location>
</feature>
<feature type="disulfide bond" evidence="1">
    <location>
        <begin position="395"/>
        <end position="408"/>
    </location>
</feature>
<feature type="disulfide bond" evidence="1">
    <location>
        <begin position="402"/>
        <end position="417"/>
    </location>
</feature>
<feature type="disulfide bond" evidence="1">
    <location>
        <begin position="419"/>
        <end position="428"/>
    </location>
</feature>
<feature type="disulfide bond" evidence="1">
    <location>
        <begin position="435"/>
        <end position="446"/>
    </location>
</feature>
<feature type="disulfide bond" evidence="1">
    <location>
        <begin position="440"/>
        <end position="455"/>
    </location>
</feature>
<feature type="disulfide bond" evidence="1">
    <location>
        <begin position="457"/>
        <end position="466"/>
    </location>
</feature>
<feature type="disulfide bond" evidence="1">
    <location>
        <begin position="473"/>
        <end position="484"/>
    </location>
</feature>
<feature type="disulfide bond" evidence="1">
    <location>
        <begin position="478"/>
        <end position="493"/>
    </location>
</feature>
<feature type="disulfide bond" evidence="1">
    <location>
        <begin position="495"/>
        <end position="504"/>
    </location>
</feature>
<feature type="disulfide bond" evidence="1">
    <location>
        <begin position="511"/>
        <end position="522"/>
    </location>
</feature>
<feature type="disulfide bond" evidence="1">
    <location>
        <begin position="516"/>
        <end position="531"/>
    </location>
</feature>
<feature type="disulfide bond" evidence="1">
    <location>
        <begin position="533"/>
        <end position="542"/>
    </location>
</feature>
<feature type="disulfide bond" evidence="1">
    <location>
        <begin position="549"/>
        <end position="559"/>
    </location>
</feature>
<feature type="disulfide bond" evidence="1">
    <location>
        <begin position="554"/>
        <end position="568"/>
    </location>
</feature>
<feature type="disulfide bond" evidence="1">
    <location>
        <begin position="570"/>
        <end position="579"/>
    </location>
</feature>
<feature type="disulfide bond" evidence="1">
    <location>
        <begin position="586"/>
        <end position="597"/>
    </location>
</feature>
<feature type="disulfide bond" evidence="1">
    <location>
        <begin position="591"/>
        <end position="606"/>
    </location>
</feature>
<feature type="disulfide bond" evidence="1">
    <location>
        <begin position="608"/>
        <end position="617"/>
    </location>
</feature>
<feature type="disulfide bond" evidence="1">
    <location>
        <begin position="624"/>
        <end position="634"/>
    </location>
</feature>
<feature type="disulfide bond" evidence="1">
    <location>
        <begin position="629"/>
        <end position="643"/>
    </location>
</feature>
<feature type="disulfide bond" evidence="1">
    <location>
        <begin position="645"/>
        <end position="654"/>
    </location>
</feature>
<feature type="disulfide bond" evidence="1">
    <location>
        <begin position="661"/>
        <end position="672"/>
    </location>
</feature>
<feature type="disulfide bond" evidence="1">
    <location>
        <begin position="666"/>
        <end position="681"/>
    </location>
</feature>
<feature type="disulfide bond" evidence="1">
    <location>
        <begin position="683"/>
        <end position="692"/>
    </location>
</feature>
<feature type="disulfide bond" evidence="1">
    <location>
        <begin position="699"/>
        <end position="709"/>
    </location>
</feature>
<feature type="disulfide bond" evidence="1">
    <location>
        <begin position="704"/>
        <end position="718"/>
    </location>
</feature>
<feature type="disulfide bond" evidence="1">
    <location>
        <begin position="720"/>
        <end position="729"/>
    </location>
</feature>
<feature type="disulfide bond" evidence="1">
    <location>
        <begin position="738"/>
        <end position="749"/>
    </location>
</feature>
<feature type="disulfide bond" evidence="1">
    <location>
        <begin position="743"/>
        <end position="758"/>
    </location>
</feature>
<feature type="disulfide bond" evidence="1">
    <location>
        <begin position="760"/>
        <end position="769"/>
    </location>
</feature>
<feature type="disulfide bond" evidence="1">
    <location>
        <begin position="775"/>
        <end position="786"/>
    </location>
</feature>
<feature type="disulfide bond" evidence="1">
    <location>
        <begin position="780"/>
        <end position="796"/>
    </location>
</feature>
<feature type="disulfide bond" evidence="1">
    <location>
        <begin position="798"/>
        <end position="807"/>
    </location>
</feature>
<feature type="disulfide bond" evidence="1">
    <location>
        <begin position="814"/>
        <end position="826"/>
    </location>
</feature>
<feature type="disulfide bond" evidence="1">
    <location>
        <begin position="820"/>
        <end position="835"/>
    </location>
</feature>
<feature type="disulfide bond" evidence="1">
    <location>
        <begin position="837"/>
        <end position="846"/>
    </location>
</feature>
<feature type="disulfide bond" evidence="1">
    <location>
        <begin position="853"/>
        <end position="864"/>
    </location>
</feature>
<feature type="disulfide bond" evidence="1">
    <location>
        <begin position="858"/>
        <end position="873"/>
    </location>
</feature>
<feature type="disulfide bond" evidence="1">
    <location>
        <begin position="875"/>
        <end position="884"/>
    </location>
</feature>
<feature type="disulfide bond" evidence="1">
    <location>
        <begin position="891"/>
        <end position="901"/>
    </location>
</feature>
<feature type="disulfide bond" evidence="1">
    <location>
        <begin position="896"/>
        <end position="910"/>
    </location>
</feature>
<feature type="disulfide bond" evidence="1">
    <location>
        <begin position="912"/>
        <end position="921"/>
    </location>
</feature>
<feature type="disulfide bond" evidence="1">
    <location>
        <begin position="928"/>
        <end position="939"/>
    </location>
</feature>
<feature type="disulfide bond" evidence="1">
    <location>
        <begin position="933"/>
        <end position="948"/>
    </location>
</feature>
<feature type="disulfide bond" evidence="1">
    <location>
        <begin position="950"/>
        <end position="959"/>
    </location>
</feature>
<feature type="disulfide bond" evidence="1">
    <location>
        <begin position="966"/>
        <end position="977"/>
    </location>
</feature>
<feature type="disulfide bond" evidence="1">
    <location>
        <begin position="971"/>
        <end position="986"/>
    </location>
</feature>
<feature type="disulfide bond" evidence="1">
    <location>
        <begin position="988"/>
        <end position="997"/>
    </location>
</feature>
<feature type="disulfide bond" evidence="1">
    <location>
        <begin position="1004"/>
        <end position="1015"/>
    </location>
</feature>
<feature type="disulfide bond" evidence="1">
    <location>
        <begin position="1009"/>
        <end position="1022"/>
    </location>
</feature>
<feature type="disulfide bond" evidence="1">
    <location>
        <begin position="1024"/>
        <end position="1033"/>
    </location>
</feature>
<feature type="disulfide bond" evidence="37">
    <location>
        <begin position="1040"/>
        <end position="1061"/>
    </location>
</feature>
<feature type="disulfide bond" evidence="1">
    <location>
        <begin position="1055"/>
        <end position="1070"/>
    </location>
</feature>
<feature type="disulfide bond" evidence="1">
    <location>
        <begin position="1072"/>
        <end position="1081"/>
    </location>
</feature>
<feature type="disulfide bond" evidence="1">
    <location>
        <begin position="1088"/>
        <end position="1099"/>
    </location>
</feature>
<feature type="disulfide bond" evidence="1">
    <location>
        <begin position="1093"/>
        <end position="1108"/>
    </location>
</feature>
<feature type="disulfide bond" evidence="1">
    <location>
        <begin position="1110"/>
        <end position="1119"/>
    </location>
</feature>
<feature type="disulfide bond" evidence="1">
    <location>
        <begin position="1126"/>
        <end position="1137"/>
    </location>
</feature>
<feature type="disulfide bond" evidence="1">
    <location>
        <begin position="1131"/>
        <end position="1146"/>
    </location>
</feature>
<feature type="disulfide bond" evidence="1">
    <location>
        <begin position="1148"/>
        <end position="1157"/>
    </location>
</feature>
<feature type="disulfide bond" evidence="1">
    <location>
        <begin position="1164"/>
        <end position="1182"/>
    </location>
</feature>
<feature type="disulfide bond" evidence="1">
    <location>
        <begin position="1176"/>
        <end position="1191"/>
    </location>
</feature>
<feature type="disulfide bond" evidence="1">
    <location>
        <begin position="1193"/>
        <end position="1202"/>
    </location>
</feature>
<feature type="disulfide bond" evidence="1">
    <location>
        <begin position="1209"/>
        <end position="1222"/>
    </location>
</feature>
<feature type="disulfide bond" evidence="1">
    <location>
        <begin position="1214"/>
        <end position="1232"/>
    </location>
</feature>
<feature type="disulfide bond" evidence="1">
    <location>
        <begin position="1234"/>
        <end position="1243"/>
    </location>
</feature>
<feature type="disulfide bond" evidence="1">
    <location>
        <begin position="1250"/>
        <end position="1261"/>
    </location>
</feature>
<feature type="disulfide bond" evidence="1">
    <location>
        <begin position="1255"/>
        <end position="1275"/>
    </location>
</feature>
<feature type="disulfide bond" evidence="1">
    <location>
        <begin position="1277"/>
        <end position="1286"/>
    </location>
</feature>
<feature type="disulfide bond" evidence="1">
    <location>
        <begin position="1293"/>
        <end position="1304"/>
    </location>
</feature>
<feature type="disulfide bond" evidence="1">
    <location>
        <begin position="1298"/>
        <end position="1313"/>
    </location>
</feature>
<feature type="disulfide bond" evidence="1">
    <location>
        <begin position="1315"/>
        <end position="1324"/>
    </location>
</feature>
<feature type="disulfide bond" evidence="1">
    <location>
        <begin position="1339"/>
        <end position="1350"/>
    </location>
</feature>
<feature type="disulfide bond" evidence="1">
    <location>
        <begin position="1344"/>
        <end position="1361"/>
    </location>
</feature>
<feature type="disulfide bond" evidence="1">
    <location>
        <begin position="1363"/>
        <end position="1372"/>
    </location>
</feature>
<feature type="disulfide bond" evidence="1">
    <location>
        <begin position="1387"/>
        <end position="1410"/>
    </location>
</feature>
<feature type="disulfide bond" evidence="1">
    <location>
        <begin position="1392"/>
        <end position="1405"/>
    </location>
</feature>
<feature type="disulfide bond" evidence="1">
    <location>
        <begin position="1401"/>
        <end position="1417"/>
    </location>
</feature>
<feature type="disulfide bond" evidence="1">
    <location>
        <begin position="1428"/>
        <end position="1451"/>
    </location>
</feature>
<feature type="disulfide bond" evidence="1">
    <location>
        <begin position="1433"/>
        <end position="1446"/>
    </location>
</feature>
<feature type="disulfide bond" evidence="1">
    <location>
        <begin position="1442"/>
        <end position="1458"/>
    </location>
</feature>
<feature type="disulfide bond" evidence="1">
    <location>
        <begin position="1467"/>
        <end position="1493"/>
    </location>
</feature>
<feature type="disulfide bond" evidence="1">
    <location>
        <begin position="1475"/>
        <end position="1488"/>
    </location>
</feature>
<feature type="disulfide bond" evidence="1">
    <location>
        <begin position="1484"/>
        <end position="1500"/>
    </location>
</feature>
<feature type="sequence variant" id="VAR_044230" description="In CADASIL1." evidence="24 27">
    <original>C</original>
    <variation>G</variation>
    <location>
        <position position="43"/>
    </location>
</feature>
<feature type="sequence variant" id="VAR_044231" description="In CADASIL1; dbSNP:rs193921045." evidence="24 27">
    <original>C</original>
    <variation>F</variation>
    <location>
        <position position="49"/>
    </location>
</feature>
<feature type="sequence variant" id="VAR_012871" description="In CADASIL1; dbSNP:rs193921045." evidence="12 36">
    <original>C</original>
    <variation>Y</variation>
    <location>
        <position position="49"/>
    </location>
</feature>
<feature type="sequence variant" id="VAR_044232" description="In CADASIL1; dbSNP:rs1555730189." evidence="12">
    <original>R</original>
    <variation>C</variation>
    <location>
        <position position="54"/>
    </location>
</feature>
<feature type="sequence variant" id="VAR_044233" description="In CADASIL1." evidence="24 27">
    <original>S</original>
    <variation>C</variation>
    <location>
        <position position="60"/>
    </location>
</feature>
<feature type="sequence variant" id="VAR_044234" description="In CADASIL1; dbSNP:rs1555730176." evidence="24 27">
    <original>C</original>
    <variation>S</variation>
    <location>
        <position position="65"/>
    </location>
</feature>
<feature type="sequence variant" id="VAR_044235" description="In CADASIL1; dbSNP:rs1555729615." evidence="19">
    <original>C</original>
    <variation>Y</variation>
    <location>
        <position position="67"/>
    </location>
</feature>
<feature type="sequence variant" id="VAR_012872" description="In CADASIL1; dbSNP:rs28937321." evidence="36">
    <original>W</original>
    <variation>C</variation>
    <location>
        <position position="71"/>
    </location>
</feature>
<feature type="sequence variant" id="VAR_044236" description="In CADASIL1; dbSNP:rs1555729610." evidence="17 21">
    <original>C</original>
    <variation>R</variation>
    <location>
        <position position="76"/>
    </location>
</feature>
<feature type="sequence variant" id="VAR_044237" description="In CADASIL1; dbSNP:rs2145443753." evidence="24 27">
    <original>C</original>
    <variation>W</variation>
    <location>
        <position position="76"/>
    </location>
</feature>
<feature type="sequence variant" id="VAR_044238" description="In CADASIL1." evidence="24">
    <location>
        <begin position="77"/>
        <end position="82"/>
    </location>
</feature>
<feature type="sequence variant" id="VAR_044239" description="In CADASIL1." evidence="9 24 27">
    <location>
        <begin position="80"/>
        <end position="84"/>
    </location>
</feature>
<feature type="sequence variant" id="VAR_044240" description="In CADASIL1; dbSNP:rs1568362232." evidence="24 27">
    <original>C</original>
    <variation>R</variation>
    <location>
        <position position="87"/>
    </location>
</feature>
<feature type="sequence variant" id="VAR_044241" description="In CADASIL1." evidence="24">
    <original>C</original>
    <variation>Y</variation>
    <location>
        <position position="87"/>
    </location>
</feature>
<feature type="sequence variant" id="VAR_012873" description="In CADASIL1; dbSNP:rs1555729604." evidence="6 9 12 20 21 24 27 36">
    <original>R</original>
    <variation>C</variation>
    <location>
        <position position="90"/>
    </location>
</feature>
<feature type="sequence variant" id="VAR_044242" description="In CADASIL1." evidence="9 24 27">
    <original>C</original>
    <variation>F</variation>
    <location>
        <position position="93"/>
    </location>
</feature>
<feature type="sequence variant" id="VAR_044243" description="In CADASIL1; dbSNP:rs2145443364." evidence="17">
    <original>C</original>
    <variation>Y</variation>
    <location>
        <position position="93"/>
    </location>
</feature>
<feature type="sequence variant" id="VAR_044244" description="In CADASIL1; dbSNP:rs774698706." evidence="24">
    <original>C</original>
    <variation>W</variation>
    <location>
        <position position="106"/>
    </location>
</feature>
<feature type="sequence variant" id="VAR_044245" description="In CADASIL1; dbSNP:rs763535473." evidence="22">
    <original>C</original>
    <variation>W</variation>
    <location>
        <position position="108"/>
    </location>
</feature>
<feature type="sequence variant" id="VAR_044246" description="In CADASIL1; dbSNP:rs1555729584." evidence="24 27">
    <original>C</original>
    <variation>Y</variation>
    <location>
        <position position="108"/>
    </location>
</feature>
<feature type="sequence variant" id="VAR_012874" description="In CADASIL1; dbSNP:rs775836288." evidence="9 12 14 21 24 27 36">
    <original>R</original>
    <variation>C</variation>
    <location>
        <position position="110"/>
    </location>
</feature>
<feature type="sequence variant" id="VAR_012875" description="In CADASIL1." evidence="8 12">
    <location>
        <begin position="114"/>
        <end position="120"/>
    </location>
</feature>
<feature type="sequence variant" id="VAR_044247" description="In CADASIL1; dbSNP:rs773539041." evidence="6 9 24 27">
    <original>C</original>
    <variation>F</variation>
    <location>
        <position position="117"/>
    </location>
</feature>
<feature type="sequence variant" id="VAR_044248" description="In CADASIL1; dbSNP:rs1469620436." evidence="26">
    <original>S</original>
    <variation>C</variation>
    <location>
        <position position="118"/>
    </location>
</feature>
<feature type="sequence variant" id="VAR_044249" description="In CADASIL1; dbSNP:rs2046935167." evidence="9 24 27">
    <original>C</original>
    <variation>F</variation>
    <location>
        <position position="123"/>
    </location>
</feature>
<feature type="sequence variant" id="VAR_044250" description="In CADASIL1." evidence="12">
    <original>C</original>
    <variation>Y</variation>
    <location>
        <position position="123"/>
    </location>
</feature>
<feature type="sequence variant" id="VAR_044251" description="In CADASIL1; dbSNP:rs1568362039." evidence="17">
    <original>C</original>
    <variation>Y</variation>
    <location>
        <position position="128"/>
    </location>
</feature>
<feature type="sequence variant" id="VAR_012876" description="In CADASIL1; no effect on ligand-binding; no effect on cell membrane localization; reduced proteolytic processing; dbSNP:rs137852642." evidence="6 7 9 12 14 20 23 24 25 27 36">
    <original>R</original>
    <variation>C</variation>
    <location>
        <position position="133"/>
    </location>
</feature>
<feature type="sequence variant" id="VAR_044252" description="In CADASIL1." evidence="14 15 24 27">
    <original>C</original>
    <variation>W</variation>
    <location>
        <position position="134"/>
    </location>
</feature>
<feature type="sequence variant" id="VAR_012877" description="In CADASIL1; dbSNP:rs1174625611." evidence="6 7 9 12 14 21 24 27 36">
    <original>R</original>
    <variation>C</variation>
    <location>
        <position position="141"/>
    </location>
</feature>
<feature type="sequence variant" id="VAR_044253" description="In CADASIL1." evidence="17">
    <original>F</original>
    <variation>C</variation>
    <location>
        <position position="142"/>
    </location>
</feature>
<feature type="sequence variant" id="VAR_044254" description="In CADASIL1." evidence="10">
    <original>C</original>
    <variation>F</variation>
    <location>
        <position position="144"/>
    </location>
</feature>
<feature type="sequence variant" id="VAR_044255" description="In CADASIL1." evidence="9 24 27">
    <original>C</original>
    <variation>S</variation>
    <location>
        <position position="144"/>
    </location>
</feature>
<feature type="sequence variant" id="VAR_044256" description="In CADASIL1; dbSNP:rs1568361985." evidence="9 24 27">
    <original>C</original>
    <variation>Y</variation>
    <location>
        <position position="144"/>
    </location>
</feature>
<feature type="sequence variant" id="VAR_044257" description="In CADASIL1." evidence="24">
    <original>S</original>
    <variation>C</variation>
    <location>
        <position position="145"/>
    </location>
</feature>
<feature type="sequence variant" id="VAR_012878" description="In CADASIL1; dbSNP:rs1555729510." evidence="12 36">
    <original>C</original>
    <variation>R</variation>
    <location>
        <position position="146"/>
    </location>
</feature>
<feature type="sequence variant" id="VAR_044258" description="In CADASIL1." evidence="24 27">
    <original>G</original>
    <variation>C</variation>
    <location>
        <position position="149"/>
    </location>
</feature>
<feature type="sequence variant" id="VAR_044259" description="In CADASIL1." evidence="9 24 27">
    <original>Y</original>
    <variation>C</variation>
    <location>
        <position position="150"/>
    </location>
</feature>
<feature type="sequence variant" id="VAR_044260" description="In CADASIL1." evidence="9 27">
    <location>
        <begin position="153"/>
        <end position="155"/>
    </location>
</feature>
<feature type="sequence variant" id="VAR_012879" description="In CADASIL1; dbSNP:rs797045014." evidence="7 9 12 14 21 24 27 36">
    <original>R</original>
    <variation>C</variation>
    <location>
        <position position="153"/>
    </location>
</feature>
<feature type="sequence variant" id="VAR_044261" description="In CADASIL1; dbSNP:rs2046933681." evidence="24">
    <original>C</original>
    <variation>S</variation>
    <location>
        <position position="155"/>
    </location>
</feature>
<feature type="sequence variant" id="VAR_044262" description="In CADASIL1; dbSNP:rs2145441998." evidence="12">
    <original>C</original>
    <variation>S</variation>
    <location>
        <position position="162"/>
    </location>
</feature>
<feature type="sequence variant" id="VAR_012880" description="In CADASIL1; dbSNP:rs28933696." evidence="6 9 12 20 21 24 27 36">
    <original>R</original>
    <variation>C</variation>
    <location>
        <position position="169"/>
    </location>
</feature>
<feature type="sequence variant" id="VAR_012881" description="In dbSNP:rs147373451." evidence="36">
    <original>H</original>
    <variation>R</variation>
    <location>
        <position position="170"/>
    </location>
</feature>
<feature type="sequence variant" id="VAR_012882" description="In CADASIL1; dbSNP:rs762729897." evidence="36">
    <original>G</original>
    <variation>C</variation>
    <location>
        <position position="171"/>
    </location>
</feature>
<feature type="sequence variant" id="VAR_044263" description="In CADASIL1; dbSNP:rs1555729486." evidence="20">
    <original>C</original>
    <variation>F</variation>
    <location>
        <position position="174"/>
    </location>
</feature>
<feature type="sequence variant" id="VAR_044264" description="In CADASIL1; dbSNP:rs1599394806." evidence="20 24 27">
    <original>C</original>
    <variation>R</variation>
    <location>
        <position position="174"/>
    </location>
</feature>
<feature type="sequence variant" id="VAR_044265" description="In CADASIL1; dbSNP:rs1555729486." evidence="6 9 12 24 27">
    <original>C</original>
    <variation>Y</variation>
    <location>
        <position position="174"/>
    </location>
</feature>
<feature type="sequence variant" id="VAR_044266" description="In CADASIL1." evidence="12">
    <original>S</original>
    <variation>C</variation>
    <location>
        <position position="180"/>
    </location>
</feature>
<feature type="sequence variant" id="VAR_012883" description="In CADASIL1; dbSNP:rs28933697." evidence="6 7 9 12 14 21 24 27 36">
    <original>R</original>
    <variation>C</variation>
    <location>
        <position position="182"/>
    </location>
</feature>
<feature type="sequence variant" id="VAR_044267" description="In CADASIL1; dbSNP:rs1568361851." evidence="24 27">
    <original>C</original>
    <variation>F</variation>
    <location>
        <position position="183"/>
    </location>
</feature>
<feature type="sequence variant" id="VAR_044268" description="In CADASIL1; no effect on ligand-binding; no effect on cell membrane localization; reduced proteolytic processing; dbSNP:rs2145441707." evidence="6 9 21 23 24">
    <original>C</original>
    <variation>R</variation>
    <location>
        <position position="183"/>
    </location>
</feature>
<feature type="sequence variant" id="VAR_044269" description="In CADASIL1." evidence="9 24 27">
    <original>C</original>
    <variation>S</variation>
    <location>
        <position position="183"/>
    </location>
</feature>
<feature type="sequence variant" id="VAR_044270" description="In CADASIL1; dbSNP:rs1568361844." evidence="14">
    <original>C</original>
    <variation>G</variation>
    <location>
        <position position="185"/>
    </location>
</feature>
<feature type="sequence variant" id="VAR_012884" description="In CADASIL1; dbSNP:rs1568361844." evidence="9 12 24 27 36">
    <original>C</original>
    <variation>R</variation>
    <location>
        <position position="185"/>
    </location>
</feature>
<feature type="sequence variant" id="VAR_044271" description="In CADASIL1; dbSNP:rs2145441610." evidence="21">
    <original>Y</original>
    <variation>C</variation>
    <location>
        <position position="189"/>
    </location>
</feature>
<feature type="sequence variant" id="VAR_044272" description="In CADASIL1; dbSNP:rs2145441541." evidence="9 24 27">
    <original>C</original>
    <variation>F</variation>
    <location>
        <position position="194"/>
    </location>
</feature>
<feature type="sequence variant" id="VAR_044273" description="In CADASIL1; dbSNP:rs1568361818." evidence="17">
    <original>C</original>
    <variation>R</variation>
    <location>
        <position position="194"/>
    </location>
</feature>
<feature type="sequence variant" id="VAR_044274" description="In CADASIL1; dbSNP:rs1568361818." evidence="21">
    <original>C</original>
    <variation>S</variation>
    <location>
        <position position="194"/>
    </location>
</feature>
<feature type="sequence variant" id="VAR_044275" description="In CADASIL1; dbSNP:rs2145441541." evidence="12">
    <original>C</original>
    <variation>Y</variation>
    <location>
        <position position="194"/>
    </location>
</feature>
<feature type="sequence variant" id="VAR_044276" description="In CADASIL1; dbSNP:rs1555729468." evidence="24">
    <original>C</original>
    <variation>Y</variation>
    <location>
        <position position="201"/>
    </location>
</feature>
<feature type="sequence variant" id="VAR_044277" description="In CADASIL1; dbSNP:rs2046931673." evidence="12">
    <original>C</original>
    <variation>Y</variation>
    <location>
        <position position="206"/>
    </location>
</feature>
<feature type="sequence variant" id="VAR_044278" description="In CADASIL1; dbSNP:rs775267348." evidence="7 12 14 21 24 27">
    <original>R</original>
    <variation>C</variation>
    <location>
        <position position="207"/>
    </location>
</feature>
<feature type="sequence variant" id="VAR_012885" description="In CADASIL1; dbSNP:rs1555729455." evidence="12 14 36">
    <original>C</original>
    <variation>S</variation>
    <location>
        <position position="212"/>
    </location>
</feature>
<feature type="sequence variant" id="VAR_044279" description="In CADASIL1." evidence="20">
    <original>R</original>
    <variation>K</variation>
    <location>
        <position position="213"/>
    </location>
</feature>
<feature type="sequence variant" id="VAR_012886" description="In CADASIL1." evidence="12 14 36">
    <original>C</original>
    <variation>G</variation>
    <location>
        <position position="222"/>
    </location>
</feature>
<feature type="sequence variant" id="VAR_044280" description="In CADASIL1; dbSNP:rs1555729452." evidence="17">
    <original>C</original>
    <variation>Y</variation>
    <location>
        <position position="222"/>
    </location>
</feature>
<feature type="sequence variant" id="VAR_012887" description="In CADASIL1; dbSNP:rs1555729451." evidence="12 36">
    <original>C</original>
    <variation>Y</variation>
    <location>
        <position position="224"/>
    </location>
</feature>
<feature type="sequence variant" id="VAR_044281" description="In CADASIL1; dbSNP:rs2145440883." evidence="17">
    <original>C</original>
    <variation>S</variation>
    <location>
        <position position="233"/>
    </location>
</feature>
<feature type="sequence variant" id="VAR_044282" description="In CADASIL1; dbSNP:rs2145440883." evidence="24 27">
    <original>C</original>
    <variation>Y</variation>
    <location>
        <position position="233"/>
    </location>
</feature>
<feature type="sequence variant" id="VAR_044283" description="In CADASIL1." evidence="24 27">
    <location>
        <begin position="239"/>
        <end position="253"/>
    </location>
</feature>
<feature type="sequence variant" id="VAR_044284" description="In CADASIL1." evidence="24 27">
    <original>C</original>
    <variation>S</variation>
    <location>
        <position position="240"/>
    </location>
</feature>
<feature type="sequence variant" id="VAR_044285" description="In CADASIL1; dbSNP:rs2145440767." evidence="24 27">
    <original>C</original>
    <variation>R</variation>
    <location>
        <position position="245"/>
    </location>
</feature>
<feature type="sequence variant" id="VAR_044286" description="In CADASIL1; dbSNP:rs1568361608." evidence="17 21">
    <original>C</original>
    <variation>R</variation>
    <location>
        <position position="251"/>
    </location>
</feature>
<feature type="sequence variant" id="VAR_012888" description="In CADASIL1; dbSNP:rs947976672." evidence="12 36">
    <original>Y</original>
    <variation>C</variation>
    <location>
        <position position="258"/>
    </location>
</feature>
<feature type="sequence variant" id="VAR_044287" description="In CADASIL1; dbSNP:rs2046928618." evidence="24 27">
    <original>C</original>
    <variation>Y</variation>
    <location>
        <position position="260"/>
    </location>
</feature>
<feature type="sequence variant" id="VAR_044288" description="In CADASIL1; requires 2 nucleotide substitutions; dbSNP:rs2145439810." evidence="27">
    <original>A</original>
    <variation>C</variation>
    <location>
        <position position="319"/>
    </location>
</feature>
<feature type="sequence variant" id="VAR_044289" description="In CADASIL1; dbSNP:rs137852641." evidence="13 21 24 27">
    <original>R</original>
    <variation>C</variation>
    <location>
        <position position="332"/>
    </location>
</feature>
<feature type="sequence variant" id="VAR_044290" description="In CADASIL1; dbSNP:rs2145439640." evidence="24 27">
    <original>S</original>
    <variation>C</variation>
    <location>
        <position position="335"/>
    </location>
</feature>
<feature type="sequence variant" id="VAR_044291" description="In CADASIL1; dbSNP:rs2046925676." evidence="24 27">
    <original>Y</original>
    <variation>C</variation>
    <location>
        <position position="337"/>
    </location>
</feature>
<feature type="sequence variant" id="VAR_044292" description="In CADASIL1; dbSNP:rs1599391986." evidence="24 27">
    <original>C</original>
    <variation>S</variation>
    <location>
        <position position="379"/>
    </location>
</feature>
<feature type="sequence variant" id="VAR_044293" description="In CADASIL1." evidence="24 27">
    <original>C</original>
    <variation>R</variation>
    <location>
        <position position="395"/>
    </location>
</feature>
<feature type="sequence variant" id="VAR_044294" description="In CADASIL1; dbSNP:rs1323608032." evidence="17">
    <original>G</original>
    <variation>C</variation>
    <location>
        <position position="420"/>
    </location>
</feature>
<feature type="sequence variant" id="VAR_044295" description="In CADASIL1; dbSNP:rs1555729068." evidence="24 27">
    <original>R</original>
    <variation>C</variation>
    <location>
        <position position="421"/>
    </location>
</feature>
<feature type="sequence variant" id="VAR_044296" description="In CADASIL1; dbSNP:rs267606915." evidence="14">
    <original>C</original>
    <variation>S</variation>
    <location>
        <position position="428"/>
    </location>
</feature>
<feature type="sequence variant" id="VAR_044297" description="In CADASIL1; dbSNP:rs1568360455." evidence="24 27">
    <original>C</original>
    <variation>Y</variation>
    <location>
        <position position="428"/>
    </location>
</feature>
<feature type="sequence variant" id="VAR_044298" description="In CADASIL1." evidence="17 21">
    <original>C</original>
    <variation>G</variation>
    <location>
        <position position="440"/>
    </location>
</feature>
<feature type="sequence variant" id="VAR_044299" description="In CADASIL1." evidence="24 27">
    <original>C</original>
    <variation>R</variation>
    <location>
        <position position="440"/>
    </location>
</feature>
<feature type="sequence variant" id="VAR_044300" description="In CADASIL1." evidence="24">
    <original>C</original>
    <variation>S</variation>
    <location>
        <position position="446"/>
    </location>
</feature>
<feature type="sequence variant" id="VAR_044301" description="In CADASIL1; dbSNP:rs762734007." evidence="17">
    <original>R</original>
    <variation>C</variation>
    <location>
        <position position="449"/>
    </location>
</feature>
<feature type="sequence variant" id="VAR_044302" description="In CADASIL1; impaired ligand-binding; strongly reduced signaling activity; no effect on cell membrane localization; reduced proteolytic processing; dbSNP:rs28933698." evidence="16 23">
    <original>C</original>
    <variation>R</variation>
    <location>
        <position position="455"/>
    </location>
</feature>
<feature type="sequence variant" id="VAR_044303" description="In CADASIL1; dbSNP:rs1313319587." evidence="27">
    <original>C</original>
    <variation>F</variation>
    <location>
        <position position="484"/>
    </location>
</feature>
<feature type="sequence variant" id="VAR_044304" description="In CADASIL1; dbSNP:rs1313319587." evidence="24">
    <original>C</original>
    <variation>Y</variation>
    <location>
        <position position="484"/>
    </location>
</feature>
<feature type="sequence variant" id="VAR_044305" description="In CADASIL1." evidence="24 27">
    <original>C</original>
    <variation>Y</variation>
    <location>
        <position position="495"/>
    </location>
</feature>
<feature type="sequence variant" id="VAR_012889" description="In dbSNP:rs11670799." evidence="36">
    <original>P</original>
    <variation>L</variation>
    <location>
        <position position="496"/>
    </location>
</feature>
<feature type="sequence variant" id="VAR_044306" description="In CADASIL1." evidence="24 27">
    <original>C</original>
    <variation>R</variation>
    <location>
        <position position="511"/>
    </location>
</feature>
<feature type="sequence variant" id="VAR_012890" description="In CADASIL1." evidence="12 36">
    <original>C</original>
    <variation>Y</variation>
    <location>
        <position position="542"/>
    </location>
</feature>
<feature type="sequence variant" id="VAR_044307" description="In CADASIL1; dbSNP:rs201118034." evidence="7">
    <original>R</original>
    <variation>C</variation>
    <location>
        <position position="544"/>
    </location>
</feature>
<feature type="sequence variant" id="VAR_044308" description="In CADASIL1; dbSNP:rs1555728814." evidence="24 27">
    <original>C</original>
    <variation>Y</variation>
    <location>
        <position position="549"/>
    </location>
</feature>
<feature type="sequence variant" id="VAR_012891" description="In CADASIL1; dbSNP:rs75068032." evidence="12 14 24 27 36">
    <original>R</original>
    <variation>C</variation>
    <location>
        <position position="558"/>
    </location>
</feature>
<feature type="sequence variant" id="VAR_012892" description="In CADASIL1; dbSNP:rs769773673." evidence="12 36">
    <original>R</original>
    <variation>C</variation>
    <location>
        <position position="578"/>
    </location>
</feature>
<feature type="sequence variant" id="VAR_044309" description="In CADASIL1; dbSNP:rs777751303." evidence="12 21">
    <original>R</original>
    <variation>C</variation>
    <location>
        <position position="607"/>
    </location>
</feature>
<feature type="sequence variant" id="VAR_072080" description="In CADASIL1; dbSNP:rs1328784046." evidence="33">
    <original>Y</original>
    <variation>C</variation>
    <location>
        <position position="710"/>
    </location>
</feature>
<feature type="sequence variant" id="VAR_012893" description="In CADASIL1; dbSNP:rs1057519101." evidence="12 27 36">
    <original>R</original>
    <variation>C</variation>
    <location>
        <position position="728"/>
    </location>
</feature>
<feature type="sequence variant" id="VAR_044310" description="In CADASIL1; dbSNP:rs2145428803." evidence="27">
    <original>C</original>
    <variation>S</variation>
    <location>
        <position position="775"/>
    </location>
</feature>
<feature type="sequence variant" id="VAR_044311" description="In CADASIL1." evidence="17 21">
    <original>G</original>
    <variation>C</variation>
    <location>
        <position position="953"/>
    </location>
</feature>
<feature type="sequence variant" id="VAR_044312" description="In CADASIL1; dbSNP:rs995523352." evidence="12">
    <original>F</original>
    <variation>C</variation>
    <location>
        <position position="984"/>
    </location>
</feature>
<feature type="sequence variant" id="VAR_012894" description="In CADASIL1; dbSNP:rs1188569102." evidence="12 14 24 27 36">
    <original>R</original>
    <variation>C</variation>
    <location>
        <position position="985"/>
    </location>
</feature>
<feature type="sequence variant" id="VAR_012895" description="In CADASIL1; dbSNP:rs1555727942." evidence="12 36">
    <original>R</original>
    <variation>C</variation>
    <location>
        <position position="1006"/>
    </location>
</feature>
<feature type="sequence variant" id="VAR_044313" description="In CADASIL1; dbSNP:rs1599382214." evidence="7">
    <original>C</original>
    <variation>R</variation>
    <location>
        <position position="1015"/>
    </location>
</feature>
<feature type="sequence variant" id="VAR_044314" description="In dbSNP:rs35769976.">
    <original>A</original>
    <variation>P</variation>
    <location>
        <position position="1020"/>
    </location>
</feature>
<feature type="sequence variant" id="VAR_044315" description="In CADASIL1; dbSNP:rs1167405466." evidence="17">
    <original>Y</original>
    <variation>C</variation>
    <location>
        <position position="1021"/>
    </location>
</feature>
<feature type="sequence variant" id="VAR_012896" description="In CADASIL1; dbSNP:rs1285584068." evidence="12 36">
    <original>R</original>
    <variation>C</variation>
    <location>
        <position position="1031"/>
    </location>
</feature>
<feature type="sequence variant" id="VAR_044316" description="In CADASIL1; requires 2 nucleotide substitutions." evidence="14">
    <original>D</original>
    <variation>C</variation>
    <location>
        <position position="1063"/>
    </location>
</feature>
<feature type="sequence variant" id="VAR_012897" description="In dbSNP:rs112197217." evidence="36">
    <original>H</original>
    <variation>Q</variation>
    <location>
        <position position="1133"/>
    </location>
</feature>
<feature type="sequence variant" id="VAR_012898" description="In dbSNP:rs10408676." evidence="36">
    <original>V</original>
    <variation>M</variation>
    <location>
        <position position="1183"/>
    </location>
</feature>
<feature type="sequence variant" id="VAR_012899" description="In CADASIL1; dbSNP:rs201680145." evidence="12 21 36">
    <original>R</original>
    <variation>C</variation>
    <location>
        <position position="1231"/>
    </location>
</feature>
<feature type="sequence variant" id="VAR_012900" description="In CADASIL1." evidence="12 36">
    <original>C</original>
    <variation>R</variation>
    <location>
        <position position="1261"/>
    </location>
</feature>
<feature type="sequence variant" id="VAR_044317" description="In CADASIL1; dbSNP:rs1209610920." evidence="24 27">
    <original>C</original>
    <variation>Y</variation>
    <location>
        <position position="1261"/>
    </location>
</feature>
<feature type="sequence variant" id="VAR_044318" description="In brain small-vessel-disease; exhibits increased NOTCH3 signaling in a ligand-independent fashion; dbSNP:rs2145409041." evidence="30">
    <original>L</original>
    <variation>P</variation>
    <location>
        <position position="1515"/>
    </location>
</feature>
<feature type="sequence variant" id="VAR_069927" description="In IMF2; dbSNP:rs367543285." evidence="32">
    <original>L</original>
    <variation>P</variation>
    <location>
        <position position="1519"/>
    </location>
</feature>
<feature type="sequence variant" id="VAR_012901" description="In dbSNP:rs1044009." evidence="35 36">
    <original>A</original>
    <variation>V</variation>
    <location>
        <position position="2223"/>
    </location>
</feature>
<feature type="strand" evidence="41">
    <location>
        <begin position="1389"/>
        <end position="1391"/>
    </location>
</feature>
<feature type="helix" evidence="42">
    <location>
        <begin position="1392"/>
        <end position="1395"/>
    </location>
</feature>
<feature type="strand" evidence="41">
    <location>
        <begin position="1398"/>
        <end position="1400"/>
    </location>
</feature>
<feature type="helix" evidence="39">
    <location>
        <begin position="1403"/>
        <end position="1405"/>
    </location>
</feature>
<feature type="turn" evidence="41">
    <location>
        <begin position="1408"/>
        <end position="1410"/>
    </location>
</feature>
<feature type="helix" evidence="41">
    <location>
        <begin position="1411"/>
        <end position="1414"/>
    </location>
</feature>
<feature type="turn" evidence="41">
    <location>
        <begin position="1415"/>
        <end position="1420"/>
    </location>
</feature>
<feature type="turn" evidence="41">
    <location>
        <begin position="1424"/>
        <end position="1427"/>
    </location>
</feature>
<feature type="turn" evidence="41">
    <location>
        <begin position="1431"/>
        <end position="1433"/>
    </location>
</feature>
<feature type="helix" evidence="41">
    <location>
        <begin position="1434"/>
        <end position="1437"/>
    </location>
</feature>
<feature type="strand" evidence="41">
    <location>
        <begin position="1439"/>
        <end position="1441"/>
    </location>
</feature>
<feature type="helix" evidence="41">
    <location>
        <begin position="1444"/>
        <end position="1446"/>
    </location>
</feature>
<feature type="turn" evidence="41">
    <location>
        <begin position="1449"/>
        <end position="1451"/>
    </location>
</feature>
<feature type="helix" evidence="41">
    <location>
        <begin position="1452"/>
        <end position="1456"/>
    </location>
</feature>
<feature type="turn" evidence="41">
    <location>
        <begin position="1457"/>
        <end position="1459"/>
    </location>
</feature>
<feature type="helix" evidence="41">
    <location>
        <begin position="1463"/>
        <end position="1465"/>
    </location>
</feature>
<feature type="helix" evidence="41">
    <location>
        <begin position="1469"/>
        <end position="1471"/>
    </location>
</feature>
<feature type="helix" evidence="41">
    <location>
        <begin position="1472"/>
        <end position="1478"/>
    </location>
</feature>
<feature type="strand" evidence="41">
    <location>
        <begin position="1481"/>
        <end position="1483"/>
    </location>
</feature>
<feature type="helix" evidence="41">
    <location>
        <begin position="1486"/>
        <end position="1488"/>
    </location>
</feature>
<feature type="helix" evidence="41">
    <location>
        <begin position="1491"/>
        <end position="1493"/>
    </location>
</feature>
<feature type="helix" evidence="41">
    <location>
        <begin position="1495"/>
        <end position="1498"/>
    </location>
</feature>
<feature type="strand" evidence="41">
    <location>
        <begin position="1510"/>
        <end position="1519"/>
    </location>
</feature>
<feature type="helix" evidence="41">
    <location>
        <begin position="1521"/>
        <end position="1526"/>
    </location>
</feature>
<feature type="helix" evidence="41">
    <location>
        <begin position="1528"/>
        <end position="1539"/>
    </location>
</feature>
<feature type="strand" evidence="41">
    <location>
        <begin position="1541"/>
        <end position="1545"/>
    </location>
</feature>
<feature type="strand" evidence="42">
    <location>
        <begin position="1549"/>
        <end position="1551"/>
    </location>
</feature>
<feature type="strand" evidence="41">
    <location>
        <begin position="1555"/>
        <end position="1558"/>
    </location>
</feature>
<feature type="strand" evidence="41">
    <location>
        <begin position="1579"/>
        <end position="1587"/>
    </location>
</feature>
<feature type="turn" evidence="42">
    <location>
        <begin position="1589"/>
        <end position="1591"/>
    </location>
</feature>
<feature type="turn" evidence="39">
    <location>
        <begin position="1595"/>
        <end position="1597"/>
    </location>
</feature>
<feature type="strand" evidence="40">
    <location>
        <begin position="1598"/>
        <end position="1600"/>
    </location>
</feature>
<feature type="helix" evidence="41">
    <location>
        <begin position="1604"/>
        <end position="1616"/>
    </location>
</feature>
<feature type="strand" evidence="41">
    <location>
        <begin position="1626"/>
        <end position="1632"/>
    </location>
</feature>
<feature type="helix" evidence="43">
    <location>
        <begin position="1644"/>
        <end position="1656"/>
    </location>
</feature>
<feature type="helix" evidence="43">
    <location>
        <begin position="1658"/>
        <end position="1665"/>
    </location>
</feature>